<protein>
    <recommendedName>
        <fullName evidence="37">Mitofusin-2</fullName>
        <ecNumber evidence="33">3.6.5.-</ecNumber>
    </recommendedName>
    <alternativeName>
        <fullName evidence="38">Transmembrane GTPase MFN2</fullName>
    </alternativeName>
</protein>
<comment type="function">
    <text evidence="1 3 6 7 20 25 29 30 33 40">Mitochondrial outer membrane GTPase that mediates mitochondrial clustering and fusion (PubMed:11181170, PubMed:11950885, PubMed:19889647, PubMed:26214738, PubMed:28114303). Mitochondria are highly dynamic organelles, and their morphology is determined by the equilibrium between mitochondrial fusion and fission events (PubMed:28114303). Overexpression induces the formation of mitochondrial networks (PubMed:28114303). Membrane clustering requires GTPase activity and may involve a major rearrangement of the coiled coil domains (Probable). Plays a central role in mitochondrial metabolism and may be associated with obesity and/or apoptosis processes (By similarity). Plays an important role in the regulation of vascular smooth muscle cell proliferation (By similarity). Involved in the clearance of damaged mitochondria via selective autophagy (mitophagy) (PubMed:23620051). Is required for PRKN recruitment to dysfunctional mitochondria (PubMed:23620051). Involved in the control of unfolded protein response (UPR) upon ER stress including activation of apoptosis and autophagy during ER stress (By similarity). Acts as an upstream regulator of EIF2AK3 and suppresses EIF2AK3 activation under basal conditions (By similarity).</text>
</comment>
<comment type="catalytic activity">
    <reaction evidence="33">
        <text>GTP + H2O = GDP + phosphate + H(+)</text>
        <dbReference type="Rhea" id="RHEA:19669"/>
        <dbReference type="ChEBI" id="CHEBI:15377"/>
        <dbReference type="ChEBI" id="CHEBI:15378"/>
        <dbReference type="ChEBI" id="CHEBI:37565"/>
        <dbReference type="ChEBI" id="CHEBI:43474"/>
        <dbReference type="ChEBI" id="CHEBI:58189"/>
    </reaction>
    <physiologicalReaction direction="left-to-right" evidence="33">
        <dbReference type="Rhea" id="RHEA:19670"/>
    </physiologicalReaction>
</comment>
<comment type="subunit">
    <text evidence="1 3 16 25 28 29 40">Forms homomultimers and heteromultimers with MFN1 (PubMed:26085578). Oligomerization is essential for mitochondrion fusion (Probable). Interacts with VAT1 (By similarity). Interacts with STOML2; may form heterooligomers (PubMed:17121834). Interacts (phosphorylated) with PRKN (PubMed:23620051). Interacts with EIF2AK3 (By similarity). Interacts with THG1L; THG1L probably functions as a guanyl-nucleotide exchange factor/GEF, activating MFN2.</text>
</comment>
<comment type="interaction">
    <interactant intactId="EBI-3324756">
        <id>O95140</id>
    </interactant>
    <interactant intactId="EBI-5323863">
        <id>Q5S007</id>
        <label>LRRK2</label>
    </interactant>
    <organismsDiffer>false</organismsDiffer>
    <experiments>3</experiments>
</comment>
<comment type="interaction">
    <interactant intactId="EBI-3324756">
        <id>O95140</id>
    </interactant>
    <interactant intactId="EBI-2341610">
        <id>Q9NX47</id>
        <label>MARCHF5</label>
    </interactant>
    <organismsDiffer>false</organismsDiffer>
    <experiments>4</experiments>
</comment>
<comment type="interaction">
    <interactant intactId="EBI-3324756">
        <id>O95140</id>
    </interactant>
    <interactant intactId="EBI-1048197">
        <id>Q8IWA4</id>
        <label>MFN1</label>
    </interactant>
    <organismsDiffer>false</organismsDiffer>
    <experiments>5</experiments>
</comment>
<comment type="interaction">
    <interactant intactId="EBI-3324756">
        <id>O95140</id>
    </interactant>
    <interactant intactId="EBI-716346">
        <id>O60260</id>
        <label>PRKN</label>
    </interactant>
    <organismsDiffer>false</organismsDiffer>
    <experiments>4</experiments>
</comment>
<comment type="interaction">
    <interactant intactId="EBI-3324756">
        <id>O95140</id>
    </interactant>
    <interactant intactId="EBI-748409">
        <id>Q9Y512</id>
        <label>SAMM50</label>
    </interactant>
    <organismsDiffer>false</organismsDiffer>
    <experiments>2</experiments>
</comment>
<comment type="subcellular location">
    <subcellularLocation>
        <location evidence="6 7 8 25 30">Mitochondrion outer membrane</location>
        <topology evidence="6 7 8 25">Multi-pass membrane protein</topology>
    </subcellularLocation>
    <text evidence="8">Colocalizes with BAX during apoptosis.</text>
</comment>
<comment type="alternative products">
    <event type="alternative splicing"/>
    <isoform>
        <id>O95140-1</id>
        <name>1</name>
        <sequence type="displayed"/>
    </isoform>
    <isoform>
        <id>O95140-2</id>
        <name>2</name>
        <sequence type="described" ref="VSP_015159 VSP_015160 VSP_015161"/>
    </isoform>
</comment>
<comment type="tissue specificity">
    <text evidence="7 9">Ubiquitous; expressed at low level. Highly expressed in heart and kidney.</text>
</comment>
<comment type="domain">
    <text evidence="2">A helix bundle is formed by helices from the N-terminal and the C-terminal part of the protein. The GTPase domain cannot be expressed by itself, without the helix bundle. Rearrangement of the helix bundle and/or of the coiled coil domains may bring membranes from adjacent mitochondria into close contact, and thereby play a role in mitochondrial fusion.</text>
</comment>
<comment type="PTM">
    <text evidence="25">Phosphorylated by PINK1.</text>
</comment>
<comment type="PTM">
    <text evidence="25 30 35">Ubiquitinated by non-degradative ubiquitin by PRKN, promoting mitochondrial fusion; deubiquitination by USP30 inhibits mitochondrial fusion (PubMed:23620051). Ubiquitinated by HUWE1 when dietary stearate (C18:0) levels are low; ubiquitination inhibits mitochondrial fusion (PubMed:26214738, PubMed:30217973).</text>
</comment>
<comment type="disease" evidence="18 21 22 23 29 32 36">
    <disease id="DI-04811">
        <name>Charcot-Marie-Tooth disease, axonal, type 2A2B</name>
        <acronym>CMT2A2B</acronym>
        <description>An axonal form of Charcot-Marie-Tooth disease, a disorder of the peripheral nervous system, characterized by progressive weakness and atrophy, initially of the peroneal muscles and later of the distal muscles of the arms. Charcot-Marie-Tooth disease is classified in two main groups on the basis of electrophysiologic properties and histopathology: primary peripheral demyelinating neuropathies (designated CMT1 when they are dominantly inherited) and primary peripheral axonal neuropathies (CMT2). Neuropathies of the CMT2 group are characterized by signs of axonal degeneration in the absence of obvious myelin alterations, normal or slightly reduced nerve conduction velocities, and progressive distal muscle weakness and atrophy. CMT2A2B is a severe form with autosomal recessive inheritance.</description>
        <dbReference type="MIM" id="617087"/>
    </disease>
    <text>The disease is caused by variants affecting the gene represented in this entry.</text>
</comment>
<comment type="disease" evidence="10 11 12 14 15 17 19 20 21 22 24">
    <disease id="DI-00275">
        <name>Charcot-Marie-Tooth disease, axonal, type 2A2A</name>
        <acronym>CMT2A2A</acronym>
        <description>An autosomal dominant, axonal form of Charcot-Marie-Tooth disease, a disorder of the peripheral nervous system, characterized by progressive weakness and atrophy, initially of the peroneal muscles and later of the distal muscles of the arms. Charcot-Marie-Tooth disease is classified in two main groups on the basis of electrophysiologic properties and histopathology: primary peripheral demyelinating neuropathies (designated CMT1 when they are dominantly inherited) and primary peripheral axonal neuropathies (CMT2). Neuropathies of the CMT2 group are characterized by signs of axonal degeneration in the absence of obvious myelin alterations, normal or slightly reduced nerve conduction velocities, and progressive distal muscle weakness and atrophy.</description>
        <dbReference type="MIM" id="609260"/>
    </disease>
    <text>The disease is caused by variants affecting the gene represented in this entry.</text>
</comment>
<comment type="disease" evidence="13 15 20 21 22 26 29">
    <disease id="DI-00292">
        <name>Neuropathy, hereditary motor and sensory, 6A, with optic atrophy</name>
        <acronym>HMSN6A</acronym>
        <description>An autosomal dominant neurologic disorder characterized by optic atrophy and peripheral sensorimotor neuropathy manifesting as axonal Charcot-Marie-Tooth disease. Charcot-Marie-Tooth disease is a disorder of the peripheral nervous system, characterized by progressive weakness and atrophy, initially of the peroneal muscles and later of the distal muscles of the arms. It is classified in two main groups on the basis of electrophysiologic properties and histopathology: primary peripheral demyelinating neuropathies and primary peripheral axonal neuropathies. Peripheral axonal neuropathies are characterized by signs of axonal regeneration in the absence of obvious myelin alterations, and normal or slightly reduced nerve conduction velocities.</description>
        <dbReference type="MIM" id="601152"/>
    </disease>
    <text>The disease is caused by variants affecting the gene represented in this entry.</text>
</comment>
<comment type="disease" evidence="18 29 34">
    <disease id="DI-06711">
        <name>Lipomatosis, multiple symmetric, with or without peripheral neuropathy</name>
        <acronym>MSL</acronym>
        <description>An autosomal recessive disorder characterized by the growth of unencapsulated, lipomatous masses affecting the upper body, especially the cervical and thoracic regions. Lipomatosis can be disfiguring, and lipoma growth around the neck may cause difficulty swallowing or breathing. The age at onset ranges from childhood to young adulthood. Some patients develop distal muscle weakness and atrophy due to axonal peripheral neuropathy.</description>
        <dbReference type="MIM" id="151800"/>
    </disease>
    <text>The disease is caused by variants affecting the gene represented in this entry.</text>
</comment>
<comment type="similarity">
    <text evidence="5">Belongs to the TRAFAC class dynamin-like GTPase superfamily. Dynamin/Fzo/YdjA family. Mitofusin subfamily.</text>
</comment>
<comment type="sequence caution" evidence="40">
    <conflict type="erroneous initiation">
        <sequence resource="EMBL-CDS" id="BAA34389"/>
    </conflict>
    <text>Extended N-terminus.</text>
</comment>
<comment type="sequence caution" evidence="40">
    <conflict type="frameshift">
        <sequence resource="EMBL-CDS" id="CAB70866"/>
    </conflict>
</comment>
<comment type="online information" name="Inherited peripheral neuropathies mutation db">
    <link uri="https://uantwerpen.vib.be/CMTMutations"/>
</comment>
<feature type="chain" id="PRO_0000127675" description="Mitofusin-2">
    <location>
        <begin position="1"/>
        <end position="757"/>
    </location>
</feature>
<feature type="topological domain" description="Cytoplasmic" evidence="4">
    <location>
        <begin position="1"/>
        <end position="604"/>
    </location>
</feature>
<feature type="transmembrane region" description="Helical; Name=1" evidence="4">
    <location>
        <begin position="605"/>
        <end position="625"/>
    </location>
</feature>
<feature type="topological domain" description="Mitochondrial intermembrane" evidence="4">
    <location>
        <position position="626"/>
    </location>
</feature>
<feature type="transmembrane region" description="Helical; Name=2" evidence="4">
    <location>
        <begin position="627"/>
        <end position="647"/>
    </location>
</feature>
<feature type="topological domain" description="Cytoplasmic" evidence="4">
    <location>
        <begin position="648"/>
        <end position="757"/>
    </location>
</feature>
<feature type="domain" description="Dynamin-type G" evidence="5">
    <location>
        <begin position="93"/>
        <end position="342"/>
    </location>
</feature>
<feature type="region of interest" description="Part of a helix bundle domain, formed by helices from N-terminal and C-terminal regions" evidence="2">
    <location>
        <begin position="30"/>
        <end position="94"/>
    </location>
</feature>
<feature type="region of interest" description="G1 motif" evidence="5">
    <location>
        <begin position="103"/>
        <end position="110"/>
    </location>
</feature>
<feature type="region of interest" description="G2 motif" evidence="5">
    <location>
        <begin position="129"/>
        <end position="130"/>
    </location>
</feature>
<feature type="region of interest" description="G3 motif" evidence="5">
    <location>
        <begin position="199"/>
        <end position="202"/>
    </location>
</feature>
<feature type="region of interest" description="G4 motif" evidence="5">
    <location>
        <begin position="258"/>
        <end position="261"/>
    </location>
</feature>
<feature type="region of interest" description="G5 motif" evidence="5">
    <location>
        <position position="288"/>
    </location>
</feature>
<feature type="region of interest" description="Part of a helix bundle domain, formed by helices from N-terminal and C-terminal regions" evidence="2">
    <location>
        <begin position="359"/>
        <end position="385"/>
    </location>
</feature>
<feature type="region of interest" description="Part of a helix bundle domain, formed by helices from N-terminal and C-terminal regions" evidence="2">
    <location>
        <begin position="722"/>
        <end position="753"/>
    </location>
</feature>
<feature type="coiled-coil region" evidence="4">
    <location>
        <begin position="391"/>
        <end position="434"/>
    </location>
</feature>
<feature type="coiled-coil region" evidence="4">
    <location>
        <begin position="695"/>
        <end position="738"/>
    </location>
</feature>
<feature type="binding site" evidence="2">
    <location>
        <begin position="106"/>
        <end position="111"/>
    </location>
    <ligand>
        <name>GTP</name>
        <dbReference type="ChEBI" id="CHEBI:37565"/>
    </ligand>
</feature>
<feature type="binding site" evidence="2">
    <location>
        <begin position="258"/>
        <end position="261"/>
    </location>
    <ligand>
        <name>GTP</name>
        <dbReference type="ChEBI" id="CHEBI:37565"/>
    </ligand>
</feature>
<feature type="binding site" evidence="2">
    <location>
        <position position="305"/>
    </location>
    <ligand>
        <name>GTP</name>
        <dbReference type="ChEBI" id="CHEBI:37565"/>
    </ligand>
</feature>
<feature type="binding site" evidence="2">
    <location>
        <position position="307"/>
    </location>
    <ligand>
        <name>GTP</name>
        <dbReference type="ChEBI" id="CHEBI:37565"/>
    </ligand>
</feature>
<feature type="modified residue" description="Phosphothreonine; by PINK1" evidence="41">
    <location>
        <position position="111"/>
    </location>
</feature>
<feature type="modified residue" description="Phosphoserine; by PINK1" evidence="41">
    <location>
        <position position="442"/>
    </location>
</feature>
<feature type="splice variant" id="VSP_015159" description="In isoform 2." evidence="40">
    <location>
        <begin position="1"/>
        <end position="302"/>
    </location>
</feature>
<feature type="splice variant" id="VSP_015160" description="In isoform 2." evidence="40">
    <original>FVSAKEVLNARIQKAQGMPEGG</original>
    <variation>MHPHLSTLSLPRRRSMAFLSSW</variation>
    <location>
        <begin position="303"/>
        <end position="324"/>
    </location>
</feature>
<feature type="splice variant" id="VSP_015161" description="In isoform 2." evidence="40">
    <original>VTRENLEQEIAAMNKKIEVLDSLQSKAKLLRNKAGWLDSELNMFTHQYLQPSR</original>
    <variation>GETLSERSMAKSTLMLLTLLFLCSFAGAQDVLTQ</variation>
    <location>
        <begin position="705"/>
        <end position="757"/>
    </location>
</feature>
<feature type="sequence variant" id="VAR_076895" description="In CMT2A2B." evidence="23">
    <location>
        <position position="38"/>
    </location>
</feature>
<feature type="sequence variant" id="VAR_018607" description="In CMT2A2A; uncertain significance; dbSNP:rs28940296." evidence="10">
    <original>V</original>
    <variation>F</variation>
    <location>
        <position position="69"/>
    </location>
</feature>
<feature type="sequence variant" id="VAR_018608" description="In CMT2A2A; likely pathogenic; dbSNP:rs28940293." evidence="10">
    <original>L</original>
    <variation>P</variation>
    <location>
        <position position="76"/>
    </location>
</feature>
<feature type="sequence variant" id="VAR_088693" description="In CMT2A2A; likely pathogenic." evidence="15">
    <original>L</original>
    <variation>P</variation>
    <location>
        <position position="92"/>
    </location>
</feature>
<feature type="sequence variant" id="VAR_018609" description="In CMT2A2A, CMT2A2B and HMSN6A; pathogenic; dbSNP:rs28940291." evidence="10 20 22 26">
    <original>R</original>
    <variation>Q</variation>
    <location>
        <position position="94"/>
    </location>
</feature>
<feature type="sequence variant" id="VAR_029876" description="In HMSN6A and CMT2A2A; pathogenic; severely reduced homo-oligomerization; no effect on hetero-oligomerization with MFN1; dbSNP:rs119103263." evidence="13 15 20 21 22 29">
    <original>R</original>
    <variation>W</variation>
    <location>
        <position position="94"/>
    </location>
</feature>
<feature type="sequence variant" id="VAR_088694" description="In CMT2A2A and HMSN6A; likely pathogenic." evidence="17 19 21">
    <original>R</original>
    <variation>W</variation>
    <location>
        <position position="104"/>
    </location>
</feature>
<feature type="sequence variant" id="VAR_088695" description="In CMT2A2A; pathogenic." evidence="15">
    <original>T</original>
    <variation>M</variation>
    <location>
        <position position="105"/>
    </location>
</feature>
<feature type="sequence variant" id="VAR_088696" description="In CMT2A2B; likely pathogenic." evidence="21">
    <original>G</original>
    <variation>R</variation>
    <location>
        <position position="108"/>
    </location>
</feature>
<feature type="sequence variant" id="VAR_087590" description="In CMT2A2B; uncertain significance." evidence="36">
    <original>V</original>
    <variation>M</variation>
    <location>
        <position position="112"/>
    </location>
</feature>
<feature type="sequence variant" id="VAR_088697" description="In CMT2A2A; likely pathogenic." evidence="15">
    <original>G</original>
    <variation>D</variation>
    <location>
        <position position="127"/>
    </location>
</feature>
<feature type="sequence variant" id="VAR_078437" description="In CMT2A2A; likely pathogenic." evidence="14">
    <original>G</original>
    <variation>V</variation>
    <location>
        <position position="127"/>
    </location>
</feature>
<feature type="sequence variant" id="VAR_088698" description="In CMT2A2A; uncertain significance." evidence="21">
    <original>H</original>
    <variation>R</variation>
    <location>
        <position position="128"/>
    </location>
</feature>
<feature type="sequence variant" id="VAR_088699" description="In CMT2A2A; uncertain significance." evidence="21">
    <original>S</original>
    <variation>I</variation>
    <location>
        <position position="156"/>
    </location>
</feature>
<feature type="sequence variant" id="VAR_080339" description="In CMT2A2B; uncertain significance; dbSNP:rs1553142699." evidence="18">
    <original>A</original>
    <variation>V</variation>
    <location>
        <position position="164"/>
    </location>
</feature>
<feature type="sequence variant" id="VAR_088700" description="In CMT2A2A; likely pathogenic." evidence="12">
    <original>H</original>
    <variation>D</variation>
    <location>
        <position position="165"/>
    </location>
</feature>
<feature type="sequence variant" id="VAR_088701" description="In CMT2A2A; uncertain significance." evidence="15">
    <original>H</original>
    <variation>R</variation>
    <location>
        <position position="165"/>
    </location>
</feature>
<feature type="sequence variant" id="VAR_088702" description="In CMT2A2A; uncertain significance." evidence="20">
    <original>I</original>
    <variation>M</variation>
    <location>
        <position position="203"/>
    </location>
</feature>
<feature type="sequence variant" id="VAR_029877" description="In HMSN6A; dbSNP:rs119103266." evidence="13">
    <original>T</original>
    <variation>I</variation>
    <location>
        <position position="206"/>
    </location>
</feature>
<feature type="sequence variant" id="VAR_080340" description="In CMT2A2B; uncertain significance." evidence="18">
    <original>D</original>
    <variation>N</variation>
    <location>
        <position position="214"/>
    </location>
</feature>
<feature type="sequence variant" id="VAR_076896" description="In CMT2A2B; dbSNP:rs387906990." evidence="23">
    <original>F</original>
    <variation>S</variation>
    <location>
        <position position="216"/>
    </location>
</feature>
<feature type="sequence variant" id="VAR_067088" description="In CMT2A2A." evidence="24">
    <original>L</original>
    <variation>V</variation>
    <location>
        <position position="233"/>
    </location>
</feature>
<feature type="sequence variant" id="VAR_088703" description="In CMT2A2A; uncertain significance." evidence="21">
    <original>T</original>
    <variation>M</variation>
    <location>
        <position position="236"/>
    </location>
</feature>
<feature type="sequence variant" id="VAR_088704" description="In CMT2A2A; uncertain significance." evidence="21">
    <original>V</original>
    <variation>M</variation>
    <location>
        <position position="244"/>
    </location>
</feature>
<feature type="sequence variant" id="VAR_018610" description="In CMT2A2A; dbSNP:rs28940295." evidence="10">
    <original>P</original>
    <variation>A</variation>
    <location>
        <position position="251"/>
    </location>
</feature>
<feature type="sequence variant" id="VAR_088705" description="In CMT2A2A; uncertain significance." evidence="20">
    <original>N</original>
    <variation>K</variation>
    <location>
        <position position="252"/>
    </location>
</feature>
<feature type="sequence variant" id="VAR_073291" description="Found in a patient with hereditary motor and sensory neuropathy; uncertain significance; dbSNP:rs755065651." evidence="27">
    <original>R</original>
    <variation>H</variation>
    <location>
        <position position="259"/>
    </location>
</feature>
<feature type="sequence variant" id="VAR_088706" description="In CMT2A2A; uncertain significance." evidence="15">
    <original>S</original>
    <variation>P</variation>
    <location>
        <position position="263"/>
    </location>
</feature>
<feature type="sequence variant" id="VAR_088707" description="In CMT2A2A; uncertain significance." evidence="20">
    <original>Q</original>
    <variation>H</variation>
    <location>
        <position position="276"/>
    </location>
</feature>
<feature type="sequence variant" id="VAR_029878" description="In HMSN6A; uncertain significance; dbSNP:rs119103264." evidence="13 21">
    <original>Q</original>
    <variation>R</variation>
    <location>
        <position position="276"/>
    </location>
</feature>
<feature type="sequence variant" id="VAR_088708" description="In CMT2A2A; uncertain significance." evidence="21">
    <original>H</original>
    <variation>Y</variation>
    <location>
        <position position="277"/>
    </location>
</feature>
<feature type="sequence variant" id="VAR_018611" description="In CMT2A2A; likely pathogenic; dbSNP:rs28940294." evidence="10 15">
    <original>R</original>
    <variation>H</variation>
    <location>
        <position position="280"/>
    </location>
</feature>
<feature type="sequence variant" id="VAR_088709" description="In CMT2A2A; likely benign; dbSNP:rs41278630." evidence="20">
    <original>G</original>
    <variation>R</variation>
    <location>
        <position position="298"/>
    </location>
</feature>
<feature type="sequence variant" id="VAR_088710" description="In MSL; uncertain significance." evidence="34">
    <location>
        <position position="343"/>
    </location>
</feature>
<feature type="sequence variant" id="VAR_078438" description="In CMT2A2A; uncertain significance." evidence="14">
    <original>E</original>
    <variation>V</variation>
    <location>
        <position position="347"/>
    </location>
</feature>
<feature type="sequence variant" id="VAR_022464" description="In CMT2A2A; dbSNP:rs119103261." evidence="11">
    <original>K</original>
    <variation>N</variation>
    <location>
        <position position="357"/>
    </location>
</feature>
<feature type="sequence variant" id="VAR_029879" description="In HMSN6A." evidence="13">
    <original>H</original>
    <variation>Y</variation>
    <location>
        <position position="361"/>
    </location>
</feature>
<feature type="sequence variant" id="VAR_076897" description="In CMT2A2B and CMT2A2A; likely pathogenic; dbSNP:rs387906991." evidence="15 18 23">
    <original>T</original>
    <variation>M</variation>
    <location>
        <position position="362"/>
    </location>
</feature>
<feature type="sequence variant" id="VAR_088711" description="In CMT2A2A; likely pathogenic." evidence="21">
    <original>R</original>
    <variation>P</variation>
    <location>
        <position position="364"/>
    </location>
</feature>
<feature type="sequence variant" id="VAR_088712" description="In CMT2A2A; likely pathogenic." evidence="20 21">
    <original>R</original>
    <variation>Q</variation>
    <location>
        <position position="364"/>
    </location>
</feature>
<feature type="sequence variant" id="VAR_029880" description="In HMSN6A and CMT2A2A; likely pathogenic; dbSNP:rs119103265." evidence="13 15 24">
    <original>R</original>
    <variation>W</variation>
    <location>
        <position position="364"/>
    </location>
</feature>
<feature type="sequence variant" id="VAR_078439" description="In CMT2A2A; uncertain significance; dbSNP:rs1553144059." evidence="14">
    <original>M</original>
    <variation>I</variation>
    <location>
        <position position="376"/>
    </location>
</feature>
<feature type="sequence variant" id="VAR_088713" description="In CMT2A2A; uncertain significance." evidence="15">
    <original>M</original>
    <variation>T</variation>
    <location>
        <position position="376"/>
    </location>
</feature>
<feature type="sequence variant" id="VAR_088714" description="In CMT2A2A; likely pathogenic." evidence="20">
    <original>M</original>
    <variation>V</variation>
    <location>
        <position position="376"/>
    </location>
</feature>
<feature type="sequence variant" id="VAR_080341" description="In CMT2A2B." evidence="18">
    <original>C</original>
    <variation>R</variation>
    <location>
        <position position="390"/>
    </location>
</feature>
<feature type="sequence variant" id="VAR_078440" description="In CMT2A2A; likely benign; also found in a patient with CMT type 1; patient fibroblasts show a mitochondrial coupling defect (ATP/O) and an increase of the respiration rate linked to complex II; dbSNP:rs138382758." evidence="14 20 22">
    <original>R</original>
    <variation>H</variation>
    <location>
        <position position="468"/>
    </location>
</feature>
<feature type="sequence variant" id="VAR_078441" description="Found in a patient with hereditary motor neuropathy; uncertain significance; dbSNP:rs376925978." evidence="22">
    <original>N</original>
    <variation>S</variation>
    <location>
        <position position="570"/>
    </location>
</feature>
<feature type="sequence variant" id="VAR_088715" description="In CMT2A2A; uncertain significance." evidence="21">
    <original>F</original>
    <variation>S</variation>
    <location>
        <position position="665"/>
    </location>
</feature>
<feature type="sequence variant" id="VAR_078442" description="In dbSNP:rs142271930." evidence="14 22 31">
    <original>V</original>
    <variation>I</variation>
    <location>
        <position position="705"/>
    </location>
</feature>
<feature type="sequence variant" id="VAR_078443" description="In CMT2A2A, CMT2A2B and MSL; decreased function in mitochondrial fusion; reduced homo-oligomerization; no effect on hetero-oligomerization with MFN1; dbSNP:rs119103267." evidence="18 21 22 29 34">
    <original>R</original>
    <variation>W</variation>
    <location>
        <position position="707"/>
    </location>
</feature>
<feature type="sequence variant" id="VAR_078444" description="Found in a patient with intermediate Charcot-Marie-Tooth disease; uncertain significance; dbSNP:rs144860227." evidence="22">
    <original>A</original>
    <variation>T</variation>
    <location>
        <position position="716"/>
    </location>
</feature>
<feature type="sequence variant" id="VAR_088716" description="In CMT2A2A; uncertain significance." evidence="21">
    <original>W</original>
    <variation>C</variation>
    <location>
        <position position="740"/>
    </location>
</feature>
<feature type="sequence variant" id="VAR_018612" description="In CMT2A2A; likely pathogenic; dbSNP:rs28940292." evidence="10">
    <original>W</original>
    <variation>S</variation>
    <location>
        <position position="740"/>
    </location>
</feature>
<feature type="sequence variant" id="VAR_067089" description="In CMT2A2A; uncertain significance; requires 2 nucleotide substitutions." evidence="24">
    <original>E</original>
    <variation>M</variation>
    <location>
        <position position="744"/>
    </location>
</feature>
<feature type="sequence variant" id="VAR_088717" description="In CMT2A2A; uncertain significance." evidence="21">
    <original>L</original>
    <variation>P</variation>
    <location>
        <position position="745"/>
    </location>
</feature>
<feature type="sequence variant" id="VAR_088718" description="In CMT2A2A; uncertain significance." evidence="21">
    <original>M</original>
    <variation>T</variation>
    <location>
        <position position="747"/>
    </location>
</feature>
<feature type="mutagenesis site" description="Does not affect its ability to cluster mitochondria; when overexpressed." evidence="6 7">
    <original>K</original>
    <variation>A</variation>
    <variation>T</variation>
    <location>
        <position position="109"/>
    </location>
</feature>
<feature type="mutagenesis site" description="Does not affect its ability to cluster mitochondria; when overexpressed." evidence="7">
    <original>S</original>
    <variation>N</variation>
    <location>
        <position position="110"/>
    </location>
</feature>
<feature type="mutagenesis site" description="Diminishes interaction with PRKN in presence of PINK1. Abolishes phosphorylation by PINK1 and interaction with PRKN in presence of PINK1; when associated with Ala-442." evidence="25">
    <original>T</original>
    <variation>A</variation>
    <location>
        <position position="111"/>
    </location>
</feature>
<feature type="mutagenesis site" description="Interacts with PRKN in absence of PINK1; when associated with Glu-442." evidence="25">
    <original>T</original>
    <variation>E</variation>
    <location>
        <position position="111"/>
    </location>
</feature>
<feature type="mutagenesis site" description="Loss of function in promoting mitochondrial fusion." evidence="33">
    <original>H</original>
    <variation>A</variation>
    <location>
        <position position="128"/>
    </location>
</feature>
<feature type="mutagenesis site" description="Loss of function in promoting mitochondrial fusion." evidence="33">
    <original>E</original>
    <variation>A</variation>
    <location>
        <position position="230"/>
    </location>
</feature>
<feature type="mutagenesis site" description="Loss of function in promoting mitochondrial fusion." evidence="33">
    <original>R</original>
    <variation>A</variation>
    <location>
        <position position="259"/>
    </location>
</feature>
<feature type="mutagenesis site" description="Does not affect its ability to cluster mitochondria; when overexpressed." evidence="7">
    <original>R</original>
    <variation>L</variation>
    <location>
        <position position="259"/>
    </location>
</feature>
<feature type="mutagenesis site" description="Loss of function in promoting mitochondrial fusion." evidence="33">
    <original>W</original>
    <variation>A</variation>
    <location>
        <position position="260"/>
    </location>
</feature>
<feature type="mutagenesis site" description="Loss of function in promoting mitochondrial fusion." evidence="33">
    <original>E</original>
    <variation>A</variation>
    <location>
        <position position="266"/>
    </location>
</feature>
<feature type="mutagenesis site" description="Diminishes interaction with PRKN in presence of PINK1. Abolishes phosphorylation by PINK1 and interaction with PRKN in presence of PINK1; when associated with Ala-111." evidence="25">
    <original>S</original>
    <variation>A</variation>
    <location>
        <position position="442"/>
    </location>
</feature>
<feature type="mutagenesis site" description="Interacts with PRKN in absence of PINK1; when associated with Glu-111." evidence="25">
    <original>S</original>
    <variation>E</variation>
    <location>
        <position position="442"/>
    </location>
</feature>
<feature type="mutagenesis site" description="Does not affect the targeting to mitochondrial outer membrane." evidence="6">
    <original>GGV</original>
    <variation>AAL</variation>
    <location>
        <begin position="622"/>
        <end position="624"/>
    </location>
</feature>
<feature type="mutagenesis site" description="Abolishes the targeting to mitochondrial outer membrane." evidence="6">
    <original>GGV</original>
    <variation>RRE</variation>
    <location>
        <begin position="622"/>
        <end position="624"/>
    </location>
</feature>
<feature type="mutagenesis site" description="Does not affect the targeting to mitochondrial outer membrane." evidence="6">
    <original>KER</original>
    <variation>TGV</variation>
    <location>
        <begin position="657"/>
        <end position="659"/>
    </location>
</feature>
<feature type="sequence conflict" description="In Ref. 2; AAD02058." evidence="40" ref="2">
    <original>C</original>
    <variation>P</variation>
    <location>
        <position position="521"/>
    </location>
</feature>
<feature type="helix" evidence="43">
    <location>
        <begin position="29"/>
        <end position="62"/>
    </location>
</feature>
<feature type="helix" evidence="43">
    <location>
        <begin position="72"/>
        <end position="92"/>
    </location>
</feature>
<feature type="strand" evidence="43">
    <location>
        <begin position="97"/>
        <end position="102"/>
    </location>
</feature>
<feature type="helix" evidence="44">
    <location>
        <begin position="105"/>
        <end position="107"/>
    </location>
</feature>
<feature type="helix" evidence="43">
    <location>
        <begin position="109"/>
        <end position="116"/>
    </location>
</feature>
<feature type="strand" evidence="43">
    <location>
        <begin position="132"/>
        <end position="143"/>
    </location>
</feature>
<feature type="strand" evidence="43">
    <location>
        <begin position="145"/>
        <end position="148"/>
    </location>
</feature>
<feature type="turn" evidence="43">
    <location>
        <begin position="149"/>
        <end position="151"/>
    </location>
</feature>
<feature type="strand" evidence="43">
    <location>
        <begin position="154"/>
        <end position="156"/>
    </location>
</feature>
<feature type="helix" evidence="43">
    <location>
        <begin position="160"/>
        <end position="168"/>
    </location>
</feature>
<feature type="strand" evidence="43">
    <location>
        <begin position="178"/>
        <end position="184"/>
    </location>
</feature>
<feature type="helix" evidence="43">
    <location>
        <begin position="185"/>
        <end position="187"/>
    </location>
</feature>
<feature type="helix" evidence="43">
    <location>
        <begin position="189"/>
        <end position="192"/>
    </location>
</feature>
<feature type="strand" evidence="43">
    <location>
        <begin position="195"/>
        <end position="199"/>
    </location>
</feature>
<feature type="helix" evidence="43">
    <location>
        <begin position="209"/>
        <end position="216"/>
    </location>
</feature>
<feature type="turn" evidence="43">
    <location>
        <begin position="217"/>
        <end position="219"/>
    </location>
</feature>
<feature type="strand" evidence="43">
    <location>
        <begin position="221"/>
        <end position="228"/>
    </location>
</feature>
<feature type="helix" evidence="43">
    <location>
        <begin position="235"/>
        <end position="247"/>
    </location>
</feature>
<feature type="strand" evidence="43">
    <location>
        <begin position="248"/>
        <end position="250"/>
    </location>
</feature>
<feature type="strand" evidence="43">
    <location>
        <begin position="252"/>
        <end position="258"/>
    </location>
</feature>
<feature type="helix" evidence="43">
    <location>
        <begin position="260"/>
        <end position="265"/>
    </location>
</feature>
<feature type="turn" evidence="43">
    <location>
        <begin position="267"/>
        <end position="269"/>
    </location>
</feature>
<feature type="helix" evidence="43">
    <location>
        <begin position="270"/>
        <end position="287"/>
    </location>
</feature>
<feature type="helix" evidence="43">
    <location>
        <begin position="294"/>
        <end position="299"/>
    </location>
</feature>
<feature type="strand" evidence="43">
    <location>
        <begin position="301"/>
        <end position="303"/>
    </location>
</feature>
<feature type="helix" evidence="43">
    <location>
        <begin position="306"/>
        <end position="317"/>
    </location>
</feature>
<feature type="helix" evidence="43">
    <location>
        <begin position="322"/>
        <end position="325"/>
    </location>
</feature>
<feature type="helix" evidence="43">
    <location>
        <begin position="331"/>
        <end position="397"/>
    </location>
</feature>
<feature type="turn" evidence="43">
    <location>
        <begin position="398"/>
        <end position="400"/>
    </location>
</feature>
<feature type="helix" evidence="43">
    <location>
        <begin position="409"/>
        <end position="419"/>
    </location>
</feature>
<feature type="helix" evidence="43">
    <location>
        <begin position="724"/>
        <end position="752"/>
    </location>
</feature>
<accession>O95140</accession>
<accession>A8K1B3</accession>
<accession>O95572</accession>
<accession>Q5JXC3</accession>
<accession>Q5JXC4</accession>
<accession>Q9H131</accession>
<accession>Q9NSX8</accession>
<keyword id="KW-0002">3D-structure</keyword>
<keyword id="KW-0025">Alternative splicing</keyword>
<keyword id="KW-0053">Apoptosis</keyword>
<keyword id="KW-0072">Autophagy</keyword>
<keyword id="KW-0144">Charcot-Marie-Tooth disease</keyword>
<keyword id="KW-0175">Coiled coil</keyword>
<keyword id="KW-0225">Disease variant</keyword>
<keyword id="KW-0342">GTP-binding</keyword>
<keyword id="KW-0378">Hydrolase</keyword>
<keyword id="KW-0472">Membrane</keyword>
<keyword id="KW-0496">Mitochondrion</keyword>
<keyword id="KW-1000">Mitochondrion outer membrane</keyword>
<keyword id="KW-0523">Neurodegeneration</keyword>
<keyword id="KW-0622">Neuropathy</keyword>
<keyword id="KW-0547">Nucleotide-binding</keyword>
<keyword id="KW-0597">Phosphoprotein</keyword>
<keyword id="KW-1267">Proteomics identification</keyword>
<keyword id="KW-1185">Reference proteome</keyword>
<keyword id="KW-0812">Transmembrane</keyword>
<keyword id="KW-1133">Transmembrane helix</keyword>
<keyword id="KW-0832">Ubl conjugation</keyword>
<keyword id="KW-0834">Unfolded protein response</keyword>
<dbReference type="EC" id="3.6.5.-" evidence="33"/>
<dbReference type="EMBL" id="AY028429">
    <property type="protein sequence ID" value="AAK18728.1"/>
    <property type="molecule type" value="mRNA"/>
</dbReference>
<dbReference type="EMBL" id="AF036536">
    <property type="protein sequence ID" value="AAD02058.2"/>
    <property type="molecule type" value="mRNA"/>
</dbReference>
<dbReference type="EMBL" id="D86987">
    <property type="protein sequence ID" value="BAA34389.2"/>
    <property type="status" value="ALT_INIT"/>
    <property type="molecule type" value="mRNA"/>
</dbReference>
<dbReference type="EMBL" id="AK289828">
    <property type="protein sequence ID" value="BAF82517.1"/>
    <property type="molecule type" value="mRNA"/>
</dbReference>
<dbReference type="EMBL" id="AL096840">
    <property type="status" value="NOT_ANNOTATED_CDS"/>
    <property type="molecule type" value="Genomic_DNA"/>
</dbReference>
<dbReference type="EMBL" id="CH471130">
    <property type="protein sequence ID" value="EAW71726.1"/>
    <property type="molecule type" value="Genomic_DNA"/>
</dbReference>
<dbReference type="EMBL" id="BC017061">
    <property type="protein sequence ID" value="AAH17061.1"/>
    <property type="molecule type" value="mRNA"/>
</dbReference>
<dbReference type="EMBL" id="AL137666">
    <property type="protein sequence ID" value="CAB70866.2"/>
    <property type="status" value="ALT_FRAME"/>
    <property type="molecule type" value="mRNA"/>
</dbReference>
<dbReference type="CCDS" id="CCDS30587.1">
    <molecule id="O95140-1"/>
</dbReference>
<dbReference type="PIR" id="T46498">
    <property type="entry name" value="T46498"/>
</dbReference>
<dbReference type="RefSeq" id="NP_001121132.1">
    <molecule id="O95140-1"/>
    <property type="nucleotide sequence ID" value="NM_001127660.2"/>
</dbReference>
<dbReference type="RefSeq" id="NP_055689.1">
    <molecule id="O95140-1"/>
    <property type="nucleotide sequence ID" value="NM_014874.4"/>
</dbReference>
<dbReference type="RefSeq" id="XP_005263600.1">
    <molecule id="O95140-1"/>
    <property type="nucleotide sequence ID" value="XM_005263543.4"/>
</dbReference>
<dbReference type="RefSeq" id="XP_005263602.1">
    <molecule id="O95140-1"/>
    <property type="nucleotide sequence ID" value="XM_005263545.4"/>
</dbReference>
<dbReference type="RefSeq" id="XP_005263604.1">
    <property type="nucleotide sequence ID" value="XM_005263547.3"/>
</dbReference>
<dbReference type="RefSeq" id="XP_005263605.1">
    <molecule id="O95140-1"/>
    <property type="nucleotide sequence ID" value="XM_005263548.4"/>
</dbReference>
<dbReference type="RefSeq" id="XP_047292105.1">
    <molecule id="O95140-1"/>
    <property type="nucleotide sequence ID" value="XM_047436149.1"/>
</dbReference>
<dbReference type="RefSeq" id="XP_047292110.1">
    <molecule id="O95140-1"/>
    <property type="nucleotide sequence ID" value="XM_047436154.1"/>
</dbReference>
<dbReference type="RefSeq" id="XP_054195924.1">
    <molecule id="O95140-1"/>
    <property type="nucleotide sequence ID" value="XM_054339949.1"/>
</dbReference>
<dbReference type="RefSeq" id="XP_054195925.1">
    <molecule id="O95140-1"/>
    <property type="nucleotide sequence ID" value="XM_054339950.1"/>
</dbReference>
<dbReference type="RefSeq" id="XP_054195926.1">
    <molecule id="O95140-1"/>
    <property type="nucleotide sequence ID" value="XM_054339951.1"/>
</dbReference>
<dbReference type="RefSeq" id="XP_054195927.1">
    <molecule id="O95140-1"/>
    <property type="nucleotide sequence ID" value="XM_054339952.1"/>
</dbReference>
<dbReference type="RefSeq" id="XP_054195928.1">
    <molecule id="O95140-1"/>
    <property type="nucleotide sequence ID" value="XM_054339953.1"/>
</dbReference>
<dbReference type="PDB" id="6JFK">
    <property type="method" value="X-ray"/>
    <property type="resolution" value="2.00 A"/>
    <property type="chains" value="A=73-419"/>
</dbReference>
<dbReference type="PDB" id="6JFL">
    <property type="method" value="X-ray"/>
    <property type="resolution" value="2.81 A"/>
    <property type="chains" value="A/B/C/D=73-419"/>
</dbReference>
<dbReference type="PDB" id="6JFM">
    <property type="method" value="X-ray"/>
    <property type="resolution" value="2.09 A"/>
    <property type="chains" value="A/B=381-419"/>
</dbReference>
<dbReference type="PDBsum" id="6JFK"/>
<dbReference type="PDBsum" id="6JFL"/>
<dbReference type="PDBsum" id="6JFM"/>
<dbReference type="SMR" id="O95140"/>
<dbReference type="BioGRID" id="115255">
    <property type="interactions" value="150"/>
</dbReference>
<dbReference type="DIP" id="DIP-42832N"/>
<dbReference type="FunCoup" id="O95140">
    <property type="interactions" value="3019"/>
</dbReference>
<dbReference type="IntAct" id="O95140">
    <property type="interactions" value="24"/>
</dbReference>
<dbReference type="MINT" id="O95140"/>
<dbReference type="STRING" id="9606.ENSP00000416338"/>
<dbReference type="BindingDB" id="O95140"/>
<dbReference type="ChEMBL" id="CHEMBL4630807"/>
<dbReference type="TCDB" id="1.N.6.1.2">
    <property type="family name" value="the mitochondrial inner/outer membrane fusion (mmf) family"/>
</dbReference>
<dbReference type="TCDB" id="1.R.1.1.1">
    <property type="family name" value="the membrane contact site (mcs) family"/>
</dbReference>
<dbReference type="iPTMnet" id="O95140"/>
<dbReference type="PhosphoSitePlus" id="O95140"/>
<dbReference type="SwissPalm" id="O95140"/>
<dbReference type="BioMuta" id="MFN2"/>
<dbReference type="jPOST" id="O95140"/>
<dbReference type="MassIVE" id="O95140"/>
<dbReference type="PaxDb" id="9606-ENSP00000235329"/>
<dbReference type="PeptideAtlas" id="O95140"/>
<dbReference type="ProteomicsDB" id="50659">
    <molecule id="O95140-1"/>
</dbReference>
<dbReference type="ProteomicsDB" id="50660">
    <molecule id="O95140-2"/>
</dbReference>
<dbReference type="Pumba" id="O95140"/>
<dbReference type="Antibodypedia" id="28394">
    <property type="antibodies" value="740 antibodies from 46 providers"/>
</dbReference>
<dbReference type="DNASU" id="9927"/>
<dbReference type="Ensembl" id="ENST00000235329.10">
    <molecule id="O95140-1"/>
    <property type="protein sequence ID" value="ENSP00000235329.5"/>
    <property type="gene ID" value="ENSG00000116688.18"/>
</dbReference>
<dbReference type="Ensembl" id="ENST00000444836.5">
    <molecule id="O95140-1"/>
    <property type="protein sequence ID" value="ENSP00000416338.1"/>
    <property type="gene ID" value="ENSG00000116688.18"/>
</dbReference>
<dbReference type="Ensembl" id="ENST00000674548.1">
    <molecule id="O95140-1"/>
    <property type="protein sequence ID" value="ENSP00000502185.1"/>
    <property type="gene ID" value="ENSG00000116688.18"/>
</dbReference>
<dbReference type="Ensembl" id="ENST00000674817.1">
    <molecule id="O95140-1"/>
    <property type="protein sequence ID" value="ENSP00000502151.1"/>
    <property type="gene ID" value="ENSG00000116688.18"/>
</dbReference>
<dbReference type="Ensembl" id="ENST00000674910.1">
    <molecule id="O95140-1"/>
    <property type="protein sequence ID" value="ENSP00000501716.1"/>
    <property type="gene ID" value="ENSG00000116688.18"/>
</dbReference>
<dbReference type="Ensembl" id="ENST00000675053.1">
    <molecule id="O95140-1"/>
    <property type="protein sequence ID" value="ENSP00000501646.1"/>
    <property type="gene ID" value="ENSG00000116688.18"/>
</dbReference>
<dbReference type="Ensembl" id="ENST00000675113.1">
    <molecule id="O95140-1"/>
    <property type="protein sequence ID" value="ENSP00000502623.1"/>
    <property type="gene ID" value="ENSG00000116688.18"/>
</dbReference>
<dbReference type="Ensembl" id="ENST00000675231.1">
    <molecule id="O95140-1"/>
    <property type="protein sequence ID" value="ENSP00000502404.1"/>
    <property type="gene ID" value="ENSG00000116688.18"/>
</dbReference>
<dbReference type="Ensembl" id="ENST00000675919.1">
    <molecule id="O95140-1"/>
    <property type="protein sequence ID" value="ENSP00000501776.1"/>
    <property type="gene ID" value="ENSG00000116688.18"/>
</dbReference>
<dbReference type="Ensembl" id="ENST00000676293.1">
    <molecule id="O95140-1"/>
    <property type="protein sequence ID" value="ENSP00000502362.1"/>
    <property type="gene ID" value="ENSG00000116688.18"/>
</dbReference>
<dbReference type="GeneID" id="9927"/>
<dbReference type="KEGG" id="hsa:9927"/>
<dbReference type="MANE-Select" id="ENST00000235329.10">
    <property type="protein sequence ID" value="ENSP00000235329.5"/>
    <property type="RefSeq nucleotide sequence ID" value="NM_014874.4"/>
    <property type="RefSeq protein sequence ID" value="NP_055689.1"/>
</dbReference>
<dbReference type="UCSC" id="uc001atn.5">
    <molecule id="O95140-1"/>
    <property type="organism name" value="human"/>
</dbReference>
<dbReference type="AGR" id="HGNC:16877"/>
<dbReference type="CTD" id="9927"/>
<dbReference type="DisGeNET" id="9927"/>
<dbReference type="GeneCards" id="MFN2"/>
<dbReference type="GeneReviews" id="MFN2"/>
<dbReference type="HGNC" id="HGNC:16877">
    <property type="gene designation" value="MFN2"/>
</dbReference>
<dbReference type="HPA" id="ENSG00000116688">
    <property type="expression patterns" value="Tissue enhanced (heart muscle, skeletal muscle, tongue)"/>
</dbReference>
<dbReference type="MalaCards" id="MFN2"/>
<dbReference type="MIM" id="151800">
    <property type="type" value="phenotype"/>
</dbReference>
<dbReference type="MIM" id="601152">
    <property type="type" value="phenotype"/>
</dbReference>
<dbReference type="MIM" id="608507">
    <property type="type" value="gene"/>
</dbReference>
<dbReference type="MIM" id="609260">
    <property type="type" value="phenotype"/>
</dbReference>
<dbReference type="MIM" id="617087">
    <property type="type" value="phenotype"/>
</dbReference>
<dbReference type="neXtProt" id="NX_O95140"/>
<dbReference type="OpenTargets" id="ENSG00000116688"/>
<dbReference type="Orphanet" id="99947">
    <property type="disease" value="Autosomal dominant Charcot-Marie-Tooth disease type 2A2"/>
</dbReference>
<dbReference type="Orphanet" id="64751">
    <property type="disease" value="Hereditary motor and sensory neuropathy type 5"/>
</dbReference>
<dbReference type="Orphanet" id="90120">
    <property type="disease" value="Hereditary motor and sensory neuropathy type 6"/>
</dbReference>
<dbReference type="Orphanet" id="2398">
    <property type="disease" value="Multiple symmetric lipomatosis"/>
</dbReference>
<dbReference type="Orphanet" id="90118">
    <property type="disease" value="Severe early-onset axonal neuropathy due to MFN2 deficiency"/>
</dbReference>
<dbReference type="PharmGKB" id="PA134986046"/>
<dbReference type="VEuPathDB" id="HostDB:ENSG00000116688"/>
<dbReference type="eggNOG" id="KOG0448">
    <property type="taxonomic scope" value="Eukaryota"/>
</dbReference>
<dbReference type="GeneTree" id="ENSGT00390000013727"/>
<dbReference type="HOGENOM" id="CLU_021212_2_0_1"/>
<dbReference type="InParanoid" id="O95140"/>
<dbReference type="OMA" id="YRINCES"/>
<dbReference type="OrthoDB" id="6256226at2759"/>
<dbReference type="PAN-GO" id="O95140">
    <property type="GO annotations" value="4 GO annotations based on evolutionary models"/>
</dbReference>
<dbReference type="PhylomeDB" id="O95140"/>
<dbReference type="TreeFam" id="TF314289"/>
<dbReference type="PathwayCommons" id="O95140"/>
<dbReference type="Reactome" id="R-HSA-5205685">
    <property type="pathway name" value="PINK1-PRKN Mediated Mitophagy"/>
</dbReference>
<dbReference type="Reactome" id="R-HSA-9013419">
    <property type="pathway name" value="RHOT2 GTPase cycle"/>
</dbReference>
<dbReference type="Reactome" id="R-HSA-983231">
    <property type="pathway name" value="Factors involved in megakaryocyte development and platelet production"/>
</dbReference>
<dbReference type="SignaLink" id="O95140"/>
<dbReference type="SIGNOR" id="O95140"/>
<dbReference type="BioGRID-ORCS" id="9927">
    <property type="hits" value="594 hits in 1165 CRISPR screens"/>
</dbReference>
<dbReference type="CD-CODE" id="FB4E32DD">
    <property type="entry name" value="Presynaptic clusters and postsynaptic densities"/>
</dbReference>
<dbReference type="ChiTaRS" id="MFN2">
    <property type="organism name" value="human"/>
</dbReference>
<dbReference type="GeneWiki" id="MFN2"/>
<dbReference type="GenomeRNAi" id="9927"/>
<dbReference type="Pharos" id="O95140">
    <property type="development level" value="Tbio"/>
</dbReference>
<dbReference type="PRO" id="PR:O95140"/>
<dbReference type="Proteomes" id="UP000005640">
    <property type="component" value="Chromosome 1"/>
</dbReference>
<dbReference type="RNAct" id="O95140">
    <property type="molecule type" value="protein"/>
</dbReference>
<dbReference type="Bgee" id="ENSG00000116688">
    <property type="expression patterns" value="Expressed in apex of heart and 214 other cell types or tissues"/>
</dbReference>
<dbReference type="ExpressionAtlas" id="O95140">
    <property type="expression patterns" value="baseline and differential"/>
</dbReference>
<dbReference type="GO" id="GO:0005829">
    <property type="term" value="C:cytosol"/>
    <property type="evidence" value="ECO:0000250"/>
    <property type="project" value="UniProtKB"/>
</dbReference>
<dbReference type="GO" id="GO:0015630">
    <property type="term" value="C:microtubule cytoskeleton"/>
    <property type="evidence" value="ECO:0007669"/>
    <property type="project" value="Ensembl"/>
</dbReference>
<dbReference type="GO" id="GO:0005741">
    <property type="term" value="C:mitochondrial outer membrane"/>
    <property type="evidence" value="ECO:0000250"/>
    <property type="project" value="UniProtKB"/>
</dbReference>
<dbReference type="GO" id="GO:0005739">
    <property type="term" value="C:mitochondrion"/>
    <property type="evidence" value="ECO:0000314"/>
    <property type="project" value="UniProtKB"/>
</dbReference>
<dbReference type="GO" id="GO:0005525">
    <property type="term" value="F:GTP binding"/>
    <property type="evidence" value="ECO:0007669"/>
    <property type="project" value="UniProtKB-KW"/>
</dbReference>
<dbReference type="GO" id="GO:0003924">
    <property type="term" value="F:GTPase activity"/>
    <property type="evidence" value="ECO:0000318"/>
    <property type="project" value="GO_Central"/>
</dbReference>
<dbReference type="GO" id="GO:0031625">
    <property type="term" value="F:ubiquitin protein ligase binding"/>
    <property type="evidence" value="ECO:0000353"/>
    <property type="project" value="UniProtKB"/>
</dbReference>
<dbReference type="GO" id="GO:0009060">
    <property type="term" value="P:aerobic respiration"/>
    <property type="evidence" value="ECO:0000315"/>
    <property type="project" value="UniProtKB"/>
</dbReference>
<dbReference type="GO" id="GO:0006915">
    <property type="term" value="P:apoptotic process"/>
    <property type="evidence" value="ECO:0007669"/>
    <property type="project" value="UniProtKB-KW"/>
</dbReference>
<dbReference type="GO" id="GO:0001825">
    <property type="term" value="P:blastocyst formation"/>
    <property type="evidence" value="ECO:0007669"/>
    <property type="project" value="Ensembl"/>
</dbReference>
<dbReference type="GO" id="GO:0048593">
    <property type="term" value="P:camera-type eye morphogenesis"/>
    <property type="evidence" value="ECO:0007669"/>
    <property type="project" value="Ensembl"/>
</dbReference>
<dbReference type="GO" id="GO:0008053">
    <property type="term" value="P:mitochondrial fusion"/>
    <property type="evidence" value="ECO:0000315"/>
    <property type="project" value="UniProtKB"/>
</dbReference>
<dbReference type="GO" id="GO:0007006">
    <property type="term" value="P:mitochondrial membrane organization"/>
    <property type="evidence" value="ECO:0000314"/>
    <property type="project" value="UniProtKB"/>
</dbReference>
<dbReference type="GO" id="GO:0051646">
    <property type="term" value="P:mitochondrion localization"/>
    <property type="evidence" value="ECO:0000314"/>
    <property type="project" value="UniProtKB"/>
</dbReference>
<dbReference type="GO" id="GO:0046580">
    <property type="term" value="P:negative regulation of Ras protein signal transduction"/>
    <property type="evidence" value="ECO:0000314"/>
    <property type="project" value="UniProtKB"/>
</dbReference>
<dbReference type="GO" id="GO:0048662">
    <property type="term" value="P:negative regulation of smooth muscle cell proliferation"/>
    <property type="evidence" value="ECO:0000250"/>
    <property type="project" value="UniProtKB"/>
</dbReference>
<dbReference type="GO" id="GO:0120162">
    <property type="term" value="P:positive regulation of cold-induced thermogenesis"/>
    <property type="evidence" value="ECO:0000250"/>
    <property type="project" value="YuBioLab"/>
</dbReference>
<dbReference type="GO" id="GO:1905461">
    <property type="term" value="P:positive regulation of vascular associated smooth muscle cell apoptotic process"/>
    <property type="evidence" value="ECO:0000315"/>
    <property type="project" value="BHF-UCL"/>
</dbReference>
<dbReference type="GO" id="GO:1904707">
    <property type="term" value="P:positive regulation of vascular associated smooth muscle cell proliferation"/>
    <property type="evidence" value="ECO:0000315"/>
    <property type="project" value="BHF-UCL"/>
</dbReference>
<dbReference type="GO" id="GO:0034497">
    <property type="term" value="P:protein localization to phagophore assembly site"/>
    <property type="evidence" value="ECO:0000314"/>
    <property type="project" value="MGI"/>
</dbReference>
<dbReference type="GO" id="GO:0006626">
    <property type="term" value="P:protein targeting to mitochondrion"/>
    <property type="evidence" value="ECO:0000314"/>
    <property type="project" value="UniProtKB"/>
</dbReference>
<dbReference type="GO" id="GO:0006986">
    <property type="term" value="P:response to unfolded protein"/>
    <property type="evidence" value="ECO:0007669"/>
    <property type="project" value="UniProtKB-KW"/>
</dbReference>
<dbReference type="GO" id="GO:0061734">
    <property type="term" value="P:type 2 mitophagy"/>
    <property type="evidence" value="ECO:0000250"/>
    <property type="project" value="ParkinsonsUK-UCL"/>
</dbReference>
<dbReference type="CDD" id="cd09912">
    <property type="entry name" value="DLP_2"/>
    <property type="match status" value="1"/>
</dbReference>
<dbReference type="FunFam" id="1.20.5.110:FF:000012">
    <property type="entry name" value="Mitofusin 2"/>
    <property type="match status" value="1"/>
</dbReference>
<dbReference type="FunFam" id="3.40.50.300:FF:000214">
    <property type="entry name" value="Mitofusin 2"/>
    <property type="match status" value="1"/>
</dbReference>
<dbReference type="Gene3D" id="1.20.5.110">
    <property type="match status" value="1"/>
</dbReference>
<dbReference type="Gene3D" id="3.40.50.300">
    <property type="entry name" value="P-loop containing nucleotide triphosphate hydrolases"/>
    <property type="match status" value="1"/>
</dbReference>
<dbReference type="InterPro" id="IPR045063">
    <property type="entry name" value="Dynamin_N"/>
</dbReference>
<dbReference type="InterPro" id="IPR006884">
    <property type="entry name" value="Fzo/mitofusin_HR2"/>
</dbReference>
<dbReference type="InterPro" id="IPR030381">
    <property type="entry name" value="G_DYNAMIN_dom"/>
</dbReference>
<dbReference type="InterPro" id="IPR027094">
    <property type="entry name" value="Mitofusin_fam"/>
</dbReference>
<dbReference type="InterPro" id="IPR027417">
    <property type="entry name" value="P-loop_NTPase"/>
</dbReference>
<dbReference type="PANTHER" id="PTHR10465:SF1">
    <property type="entry name" value="MITOFUSIN-2"/>
    <property type="match status" value="1"/>
</dbReference>
<dbReference type="PANTHER" id="PTHR10465">
    <property type="entry name" value="TRANSMEMBRANE GTPASE FZO1"/>
    <property type="match status" value="1"/>
</dbReference>
<dbReference type="Pfam" id="PF00350">
    <property type="entry name" value="Dynamin_N"/>
    <property type="match status" value="1"/>
</dbReference>
<dbReference type="Pfam" id="PF04799">
    <property type="entry name" value="Fzo_mitofusin"/>
    <property type="match status" value="1"/>
</dbReference>
<dbReference type="SUPFAM" id="SSF111479">
    <property type="entry name" value="Fzo-like conserved region"/>
    <property type="match status" value="1"/>
</dbReference>
<dbReference type="SUPFAM" id="SSF52540">
    <property type="entry name" value="P-loop containing nucleoside triphosphate hydrolases"/>
    <property type="match status" value="1"/>
</dbReference>
<dbReference type="PROSITE" id="PS51718">
    <property type="entry name" value="G_DYNAMIN_2"/>
    <property type="match status" value="1"/>
</dbReference>
<name>MFN2_HUMAN</name>
<proteinExistence type="evidence at protein level"/>
<evidence type="ECO:0000250" key="1">
    <source>
        <dbReference type="UniProtKB" id="Q80U63"/>
    </source>
</evidence>
<evidence type="ECO:0000250" key="2">
    <source>
        <dbReference type="UniProtKB" id="Q8IWA4"/>
    </source>
</evidence>
<evidence type="ECO:0000250" key="3">
    <source>
        <dbReference type="UniProtKB" id="Q8R500"/>
    </source>
</evidence>
<evidence type="ECO:0000255" key="4"/>
<evidence type="ECO:0000255" key="5">
    <source>
        <dbReference type="PROSITE-ProRule" id="PRU01055"/>
    </source>
</evidence>
<evidence type="ECO:0000269" key="6">
    <source>
    </source>
</evidence>
<evidence type="ECO:0000269" key="7">
    <source>
    </source>
</evidence>
<evidence type="ECO:0000269" key="8">
    <source>
    </source>
</evidence>
<evidence type="ECO:0000269" key="9">
    <source>
    </source>
</evidence>
<evidence type="ECO:0000269" key="10">
    <source>
    </source>
</evidence>
<evidence type="ECO:0000269" key="11">
    <source>
    </source>
</evidence>
<evidence type="ECO:0000269" key="12">
    <source>
    </source>
</evidence>
<evidence type="ECO:0000269" key="13">
    <source>
    </source>
</evidence>
<evidence type="ECO:0000269" key="14">
    <source>
    </source>
</evidence>
<evidence type="ECO:0000269" key="15">
    <source>
    </source>
</evidence>
<evidence type="ECO:0000269" key="16">
    <source>
    </source>
</evidence>
<evidence type="ECO:0000269" key="17">
    <source>
    </source>
</evidence>
<evidence type="ECO:0000269" key="18">
    <source>
    </source>
</evidence>
<evidence type="ECO:0000269" key="19">
    <source>
    </source>
</evidence>
<evidence type="ECO:0000269" key="20">
    <source>
    </source>
</evidence>
<evidence type="ECO:0000269" key="21">
    <source>
    </source>
</evidence>
<evidence type="ECO:0000269" key="22">
    <source>
    </source>
</evidence>
<evidence type="ECO:0000269" key="23">
    <source>
    </source>
</evidence>
<evidence type="ECO:0000269" key="24">
    <source>
    </source>
</evidence>
<evidence type="ECO:0000269" key="25">
    <source>
    </source>
</evidence>
<evidence type="ECO:0000269" key="26">
    <source>
    </source>
</evidence>
<evidence type="ECO:0000269" key="27">
    <source>
    </source>
</evidence>
<evidence type="ECO:0000269" key="28">
    <source>
    </source>
</evidence>
<evidence type="ECO:0000269" key="29">
    <source>
    </source>
</evidence>
<evidence type="ECO:0000269" key="30">
    <source>
    </source>
</evidence>
<evidence type="ECO:0000269" key="31">
    <source>
    </source>
</evidence>
<evidence type="ECO:0000269" key="32">
    <source>
    </source>
</evidence>
<evidence type="ECO:0000269" key="33">
    <source>
    </source>
</evidence>
<evidence type="ECO:0000269" key="34">
    <source>
    </source>
</evidence>
<evidence type="ECO:0000269" key="35">
    <source>
    </source>
</evidence>
<evidence type="ECO:0000269" key="36">
    <source>
    </source>
</evidence>
<evidence type="ECO:0000303" key="37">
    <source>
    </source>
</evidence>
<evidence type="ECO:0000303" key="38">
    <source>
    </source>
</evidence>
<evidence type="ECO:0000303" key="39">
    <source>
    </source>
</evidence>
<evidence type="ECO:0000305" key="40"/>
<evidence type="ECO:0000305" key="41">
    <source>
    </source>
</evidence>
<evidence type="ECO:0000312" key="42">
    <source>
        <dbReference type="HGNC" id="HGNC:16877"/>
    </source>
</evidence>
<evidence type="ECO:0007829" key="43">
    <source>
        <dbReference type="PDB" id="6JFK"/>
    </source>
</evidence>
<evidence type="ECO:0007829" key="44">
    <source>
        <dbReference type="PDB" id="6JFM"/>
    </source>
</evidence>
<reference key="1">
    <citation type="journal article" date="2003" name="J. Biol. Chem.">
        <title>Mitofusin-2 determines mitochondrial network architecture and mitochondrial metabolism. A novel regulatory mechanism altered in obesity.</title>
        <authorList>
            <person name="Bach D."/>
            <person name="Pich S."/>
            <person name="Soriano F.X."/>
            <person name="Vega N."/>
            <person name="Baumgartner B."/>
            <person name="Oriola J."/>
            <person name="Daugaard J.R."/>
            <person name="Lloberas J."/>
            <person name="Camps M."/>
            <person name="Zierath J.R."/>
            <person name="Rabasa-Lhoret R."/>
            <person name="Wallberg-Henriksson H."/>
            <person name="Laville M."/>
            <person name="Palacin M."/>
            <person name="Vidal H."/>
            <person name="Rivera F."/>
            <person name="Brand M."/>
            <person name="Zorzano A."/>
        </authorList>
    </citation>
    <scope>NUCLEOTIDE SEQUENCE [MRNA] (ISOFORM 1)</scope>
</reference>
<reference key="2">
    <citation type="journal article" date="2004" name="Nat. Cell Biol.">
        <title>Dysregulation of HSG triggers vascular proliferative disorders.</title>
        <authorList>
            <person name="Chen K.-H."/>
            <person name="Guo X."/>
            <person name="Ma D."/>
            <person name="Guo Y."/>
            <person name="Li Q."/>
            <person name="Yang D."/>
            <person name="Li P."/>
            <person name="Qiu X."/>
            <person name="Wen S."/>
            <person name="Xiao R.-P."/>
            <person name="Tang J."/>
        </authorList>
    </citation>
    <scope>NUCLEOTIDE SEQUENCE [MRNA] (ISOFORM 1)</scope>
</reference>
<reference key="3">
    <citation type="journal article" date="1996" name="DNA Res.">
        <title>Prediction of the coding sequences of unidentified human genes. VI. The coding sequences of 80 new genes (KIAA0201-KIAA0280) deduced by analysis of cDNA clones from cell line KG-1 and brain.</title>
        <authorList>
            <person name="Nagase T."/>
            <person name="Seki N."/>
            <person name="Ishikawa K."/>
            <person name="Ohira M."/>
            <person name="Kawarabayasi Y."/>
            <person name="Ohara O."/>
            <person name="Tanaka A."/>
            <person name="Kotani H."/>
            <person name="Miyajima N."/>
            <person name="Nomura N."/>
        </authorList>
    </citation>
    <scope>NUCLEOTIDE SEQUENCE [LARGE SCALE MRNA] (ISOFORM 1)</scope>
    <source>
        <tissue>Bone marrow</tissue>
    </source>
</reference>
<reference key="4">
    <citation type="journal article" date="2004" name="Nat. Genet.">
        <title>Complete sequencing and characterization of 21,243 full-length human cDNAs.</title>
        <authorList>
            <person name="Ota T."/>
            <person name="Suzuki Y."/>
            <person name="Nishikawa T."/>
            <person name="Otsuki T."/>
            <person name="Sugiyama T."/>
            <person name="Irie R."/>
            <person name="Wakamatsu A."/>
            <person name="Hayashi K."/>
            <person name="Sato H."/>
            <person name="Nagai K."/>
            <person name="Kimura K."/>
            <person name="Makita H."/>
            <person name="Sekine M."/>
            <person name="Obayashi M."/>
            <person name="Nishi T."/>
            <person name="Shibahara T."/>
            <person name="Tanaka T."/>
            <person name="Ishii S."/>
            <person name="Yamamoto J."/>
            <person name="Saito K."/>
            <person name="Kawai Y."/>
            <person name="Isono Y."/>
            <person name="Nakamura Y."/>
            <person name="Nagahari K."/>
            <person name="Murakami K."/>
            <person name="Yasuda T."/>
            <person name="Iwayanagi T."/>
            <person name="Wagatsuma M."/>
            <person name="Shiratori A."/>
            <person name="Sudo H."/>
            <person name="Hosoiri T."/>
            <person name="Kaku Y."/>
            <person name="Kodaira H."/>
            <person name="Kondo H."/>
            <person name="Sugawara M."/>
            <person name="Takahashi M."/>
            <person name="Kanda K."/>
            <person name="Yokoi T."/>
            <person name="Furuya T."/>
            <person name="Kikkawa E."/>
            <person name="Omura Y."/>
            <person name="Abe K."/>
            <person name="Kamihara K."/>
            <person name="Katsuta N."/>
            <person name="Sato K."/>
            <person name="Tanikawa M."/>
            <person name="Yamazaki M."/>
            <person name="Ninomiya K."/>
            <person name="Ishibashi T."/>
            <person name="Yamashita H."/>
            <person name="Murakawa K."/>
            <person name="Fujimori K."/>
            <person name="Tanai H."/>
            <person name="Kimata M."/>
            <person name="Watanabe M."/>
            <person name="Hiraoka S."/>
            <person name="Chiba Y."/>
            <person name="Ishida S."/>
            <person name="Ono Y."/>
            <person name="Takiguchi S."/>
            <person name="Watanabe S."/>
            <person name="Yosida M."/>
            <person name="Hotuta T."/>
            <person name="Kusano J."/>
            <person name="Kanehori K."/>
            <person name="Takahashi-Fujii A."/>
            <person name="Hara H."/>
            <person name="Tanase T.-O."/>
            <person name="Nomura Y."/>
            <person name="Togiya S."/>
            <person name="Komai F."/>
            <person name="Hara R."/>
            <person name="Takeuchi K."/>
            <person name="Arita M."/>
            <person name="Imose N."/>
            <person name="Musashino K."/>
            <person name="Yuuki H."/>
            <person name="Oshima A."/>
            <person name="Sasaki N."/>
            <person name="Aotsuka S."/>
            <person name="Yoshikawa Y."/>
            <person name="Matsunawa H."/>
            <person name="Ichihara T."/>
            <person name="Shiohata N."/>
            <person name="Sano S."/>
            <person name="Moriya S."/>
            <person name="Momiyama H."/>
            <person name="Satoh N."/>
            <person name="Takami S."/>
            <person name="Terashima Y."/>
            <person name="Suzuki O."/>
            <person name="Nakagawa S."/>
            <person name="Senoh A."/>
            <person name="Mizoguchi H."/>
            <person name="Goto Y."/>
            <person name="Shimizu F."/>
            <person name="Wakebe H."/>
            <person name="Hishigaki H."/>
            <person name="Watanabe T."/>
            <person name="Sugiyama A."/>
            <person name="Takemoto M."/>
            <person name="Kawakami B."/>
            <person name="Yamazaki M."/>
            <person name="Watanabe K."/>
            <person name="Kumagai A."/>
            <person name="Itakura S."/>
            <person name="Fukuzumi Y."/>
            <person name="Fujimori Y."/>
            <person name="Komiyama M."/>
            <person name="Tashiro H."/>
            <person name="Tanigami A."/>
            <person name="Fujiwara T."/>
            <person name="Ono T."/>
            <person name="Yamada K."/>
            <person name="Fujii Y."/>
            <person name="Ozaki K."/>
            <person name="Hirao M."/>
            <person name="Ohmori Y."/>
            <person name="Kawabata A."/>
            <person name="Hikiji T."/>
            <person name="Kobatake N."/>
            <person name="Inagaki H."/>
            <person name="Ikema Y."/>
            <person name="Okamoto S."/>
            <person name="Okitani R."/>
            <person name="Kawakami T."/>
            <person name="Noguchi S."/>
            <person name="Itoh T."/>
            <person name="Shigeta K."/>
            <person name="Senba T."/>
            <person name="Matsumura K."/>
            <person name="Nakajima Y."/>
            <person name="Mizuno T."/>
            <person name="Morinaga M."/>
            <person name="Sasaki M."/>
            <person name="Togashi T."/>
            <person name="Oyama M."/>
            <person name="Hata H."/>
            <person name="Watanabe M."/>
            <person name="Komatsu T."/>
            <person name="Mizushima-Sugano J."/>
            <person name="Satoh T."/>
            <person name="Shirai Y."/>
            <person name="Takahashi Y."/>
            <person name="Nakagawa K."/>
            <person name="Okumura K."/>
            <person name="Nagase T."/>
            <person name="Nomura N."/>
            <person name="Kikuchi H."/>
            <person name="Masuho Y."/>
            <person name="Yamashita R."/>
            <person name="Nakai K."/>
            <person name="Yada T."/>
            <person name="Nakamura Y."/>
            <person name="Ohara O."/>
            <person name="Isogai T."/>
            <person name="Sugano S."/>
        </authorList>
    </citation>
    <scope>NUCLEOTIDE SEQUENCE [LARGE SCALE MRNA] (ISOFORM 1)</scope>
    <source>
        <tissue>Brain</tissue>
    </source>
</reference>
<reference key="5">
    <citation type="journal article" date="2006" name="Nature">
        <title>The DNA sequence and biological annotation of human chromosome 1.</title>
        <authorList>
            <person name="Gregory S.G."/>
            <person name="Barlow K.F."/>
            <person name="McLay K.E."/>
            <person name="Kaul R."/>
            <person name="Swarbreck D."/>
            <person name="Dunham A."/>
            <person name="Scott C.E."/>
            <person name="Howe K.L."/>
            <person name="Woodfine K."/>
            <person name="Spencer C.C.A."/>
            <person name="Jones M.C."/>
            <person name="Gillson C."/>
            <person name="Searle S."/>
            <person name="Zhou Y."/>
            <person name="Kokocinski F."/>
            <person name="McDonald L."/>
            <person name="Evans R."/>
            <person name="Phillips K."/>
            <person name="Atkinson A."/>
            <person name="Cooper R."/>
            <person name="Jones C."/>
            <person name="Hall R.E."/>
            <person name="Andrews T.D."/>
            <person name="Lloyd C."/>
            <person name="Ainscough R."/>
            <person name="Almeida J.P."/>
            <person name="Ambrose K.D."/>
            <person name="Anderson F."/>
            <person name="Andrew R.W."/>
            <person name="Ashwell R.I.S."/>
            <person name="Aubin K."/>
            <person name="Babbage A.K."/>
            <person name="Bagguley C.L."/>
            <person name="Bailey J."/>
            <person name="Beasley H."/>
            <person name="Bethel G."/>
            <person name="Bird C.P."/>
            <person name="Bray-Allen S."/>
            <person name="Brown J.Y."/>
            <person name="Brown A.J."/>
            <person name="Buckley D."/>
            <person name="Burton J."/>
            <person name="Bye J."/>
            <person name="Carder C."/>
            <person name="Chapman J.C."/>
            <person name="Clark S.Y."/>
            <person name="Clarke G."/>
            <person name="Clee C."/>
            <person name="Cobley V."/>
            <person name="Collier R.E."/>
            <person name="Corby N."/>
            <person name="Coville G.J."/>
            <person name="Davies J."/>
            <person name="Deadman R."/>
            <person name="Dunn M."/>
            <person name="Earthrowl M."/>
            <person name="Ellington A.G."/>
            <person name="Errington H."/>
            <person name="Frankish A."/>
            <person name="Frankland J."/>
            <person name="French L."/>
            <person name="Garner P."/>
            <person name="Garnett J."/>
            <person name="Gay L."/>
            <person name="Ghori M.R.J."/>
            <person name="Gibson R."/>
            <person name="Gilby L.M."/>
            <person name="Gillett W."/>
            <person name="Glithero R.J."/>
            <person name="Grafham D.V."/>
            <person name="Griffiths C."/>
            <person name="Griffiths-Jones S."/>
            <person name="Grocock R."/>
            <person name="Hammond S."/>
            <person name="Harrison E.S.I."/>
            <person name="Hart E."/>
            <person name="Haugen E."/>
            <person name="Heath P.D."/>
            <person name="Holmes S."/>
            <person name="Holt K."/>
            <person name="Howden P.J."/>
            <person name="Hunt A.R."/>
            <person name="Hunt S.E."/>
            <person name="Hunter G."/>
            <person name="Isherwood J."/>
            <person name="James R."/>
            <person name="Johnson C."/>
            <person name="Johnson D."/>
            <person name="Joy A."/>
            <person name="Kay M."/>
            <person name="Kershaw J.K."/>
            <person name="Kibukawa M."/>
            <person name="Kimberley A.M."/>
            <person name="King A."/>
            <person name="Knights A.J."/>
            <person name="Lad H."/>
            <person name="Laird G."/>
            <person name="Lawlor S."/>
            <person name="Leongamornlert D.A."/>
            <person name="Lloyd D.M."/>
            <person name="Loveland J."/>
            <person name="Lovell J."/>
            <person name="Lush M.J."/>
            <person name="Lyne R."/>
            <person name="Martin S."/>
            <person name="Mashreghi-Mohammadi M."/>
            <person name="Matthews L."/>
            <person name="Matthews N.S.W."/>
            <person name="McLaren S."/>
            <person name="Milne S."/>
            <person name="Mistry S."/>
            <person name="Moore M.J.F."/>
            <person name="Nickerson T."/>
            <person name="O'Dell C.N."/>
            <person name="Oliver K."/>
            <person name="Palmeiri A."/>
            <person name="Palmer S.A."/>
            <person name="Parker A."/>
            <person name="Patel D."/>
            <person name="Pearce A.V."/>
            <person name="Peck A.I."/>
            <person name="Pelan S."/>
            <person name="Phelps K."/>
            <person name="Phillimore B.J."/>
            <person name="Plumb R."/>
            <person name="Rajan J."/>
            <person name="Raymond C."/>
            <person name="Rouse G."/>
            <person name="Saenphimmachak C."/>
            <person name="Sehra H.K."/>
            <person name="Sheridan E."/>
            <person name="Shownkeen R."/>
            <person name="Sims S."/>
            <person name="Skuce C.D."/>
            <person name="Smith M."/>
            <person name="Steward C."/>
            <person name="Subramanian S."/>
            <person name="Sycamore N."/>
            <person name="Tracey A."/>
            <person name="Tromans A."/>
            <person name="Van Helmond Z."/>
            <person name="Wall M."/>
            <person name="Wallis J.M."/>
            <person name="White S."/>
            <person name="Whitehead S.L."/>
            <person name="Wilkinson J.E."/>
            <person name="Willey D.L."/>
            <person name="Williams H."/>
            <person name="Wilming L."/>
            <person name="Wray P.W."/>
            <person name="Wu Z."/>
            <person name="Coulson A."/>
            <person name="Vaudin M."/>
            <person name="Sulston J.E."/>
            <person name="Durbin R.M."/>
            <person name="Hubbard T."/>
            <person name="Wooster R."/>
            <person name="Dunham I."/>
            <person name="Carter N.P."/>
            <person name="McVean G."/>
            <person name="Ross M.T."/>
            <person name="Harrow J."/>
            <person name="Olson M.V."/>
            <person name="Beck S."/>
            <person name="Rogers J."/>
            <person name="Bentley D.R."/>
        </authorList>
    </citation>
    <scope>NUCLEOTIDE SEQUENCE [LARGE SCALE GENOMIC DNA]</scope>
</reference>
<reference key="6">
    <citation type="submission" date="2005-07" db="EMBL/GenBank/DDBJ databases">
        <authorList>
            <person name="Mural R.J."/>
            <person name="Istrail S."/>
            <person name="Sutton G.G."/>
            <person name="Florea L."/>
            <person name="Halpern A.L."/>
            <person name="Mobarry C.M."/>
            <person name="Lippert R."/>
            <person name="Walenz B."/>
            <person name="Shatkay H."/>
            <person name="Dew I."/>
            <person name="Miller J.R."/>
            <person name="Flanigan M.J."/>
            <person name="Edwards N.J."/>
            <person name="Bolanos R."/>
            <person name="Fasulo D."/>
            <person name="Halldorsson B.V."/>
            <person name="Hannenhalli S."/>
            <person name="Turner R."/>
            <person name="Yooseph S."/>
            <person name="Lu F."/>
            <person name="Nusskern D.R."/>
            <person name="Shue B.C."/>
            <person name="Zheng X.H."/>
            <person name="Zhong F."/>
            <person name="Delcher A.L."/>
            <person name="Huson D.H."/>
            <person name="Kravitz S.A."/>
            <person name="Mouchard L."/>
            <person name="Reinert K."/>
            <person name="Remington K.A."/>
            <person name="Clark A.G."/>
            <person name="Waterman M.S."/>
            <person name="Eichler E.E."/>
            <person name="Adams M.D."/>
            <person name="Hunkapiller M.W."/>
            <person name="Myers E.W."/>
            <person name="Venter J.C."/>
        </authorList>
    </citation>
    <scope>NUCLEOTIDE SEQUENCE [LARGE SCALE GENOMIC DNA]</scope>
</reference>
<reference key="7">
    <citation type="journal article" date="2004" name="Genome Res.">
        <title>The status, quality, and expansion of the NIH full-length cDNA project: the Mammalian Gene Collection (MGC).</title>
        <authorList>
            <consortium name="The MGC Project Team"/>
        </authorList>
    </citation>
    <scope>NUCLEOTIDE SEQUENCE [LARGE SCALE MRNA] (ISOFORM 1)</scope>
    <source>
        <tissue>Pancreas</tissue>
    </source>
</reference>
<reference key="8">
    <citation type="journal article" date="2007" name="BMC Genomics">
        <title>The full-ORF clone resource of the German cDNA consortium.</title>
        <authorList>
            <person name="Bechtel S."/>
            <person name="Rosenfelder H."/>
            <person name="Duda A."/>
            <person name="Schmidt C.P."/>
            <person name="Ernst U."/>
            <person name="Wellenreuther R."/>
            <person name="Mehrle A."/>
            <person name="Schuster C."/>
            <person name="Bahr A."/>
            <person name="Bloecker H."/>
            <person name="Heubner D."/>
            <person name="Hoerlein A."/>
            <person name="Michel G."/>
            <person name="Wedler H."/>
            <person name="Koehrer K."/>
            <person name="Ottenwaelder B."/>
            <person name="Poustka A."/>
            <person name="Wiemann S."/>
            <person name="Schupp I."/>
        </authorList>
    </citation>
    <scope>NUCLEOTIDE SEQUENCE [LARGE SCALE MRNA] OF 553-757 (ISOFORM 1)</scope>
    <source>
        <tissue>Testis</tissue>
    </source>
</reference>
<reference key="9">
    <citation type="journal article" date="2001" name="J. Cell Sci.">
        <title>Control of mitochondrial morphology by a human mitofusin.</title>
        <authorList>
            <person name="Santel A."/>
            <person name="Fuller M.T."/>
        </authorList>
    </citation>
    <scope>FUNCTION</scope>
    <scope>SUBCELLULAR LOCATION</scope>
    <scope>MUTAGENESIS OF LYS-109; 622-GLY--VAL-624 AND 657-LYS--ARG-659</scope>
</reference>
<reference key="10">
    <citation type="journal article" date="2002" name="J. Cell Sci.">
        <title>Membrane topology and mitochondrial targeting of mitofusins, ubiquitous mammalian homologs of the transmembrane GTPase Fzo.</title>
        <authorList>
            <person name="Rojo M."/>
            <person name="Legros F."/>
            <person name="Chateau D."/>
            <person name="Lombes A."/>
        </authorList>
    </citation>
    <scope>FUNCTION</scope>
    <scope>SUBCELLULAR LOCATION</scope>
    <scope>MEMBRANE TOPOLOGY</scope>
    <scope>TISSUE SPECIFICITY</scope>
    <scope>MUTAGENESIS OF LYS-109; SER-110 AND ARG-259</scope>
</reference>
<reference key="11">
    <citation type="journal article" date="2002" name="J. Cell Biol.">
        <title>Spatial and temporal association of Bax with mitochondrial fission sites, Drp1, and Mfn2 during apoptosis.</title>
        <authorList>
            <person name="Karbowski M."/>
            <person name="Lee Y.-J."/>
            <person name="Gaume B."/>
            <person name="Jeong S.-Y."/>
            <person name="Frank S."/>
            <person name="Nechushtan A."/>
            <person name="Santel A."/>
            <person name="Fuller M."/>
            <person name="Smith C.L."/>
            <person name="Youle R.J."/>
        </authorList>
    </citation>
    <scope>SUBCELLULAR LOCATION</scope>
</reference>
<reference key="12">
    <citation type="journal article" date="2003" name="J. Cell Sci.">
        <title>Mitofusin-1 protein is a generally expressed mediator of mitochondrial fusion in mammalian cells.</title>
        <authorList>
            <person name="Santel A."/>
            <person name="Frank S."/>
            <person name="Gaume B."/>
            <person name="Herrler M."/>
            <person name="Youle R.J."/>
            <person name="Fuller M.T."/>
        </authorList>
    </citation>
    <scope>TISSUE SPECIFICITY</scope>
</reference>
<reference key="13">
    <citation type="journal article" date="2004" name="Nat. Genet.">
        <title>Mutations in the mitochondrial GTPase mitofusin 2 cause Charcot-Marie-Tooth neuropathy type 2A.</title>
        <authorList>
            <person name="Zuechner S."/>
            <person name="Mersiyanova I.V."/>
            <person name="Muglia M."/>
            <person name="Bissar-Tadmouri N."/>
            <person name="Rochelle J."/>
            <person name="Dadali E.L."/>
            <person name="Zappia M."/>
            <person name="Nelis E."/>
            <person name="Patitucci A."/>
            <person name="Senderek J."/>
            <person name="Parman Y."/>
            <person name="Evgrafov O."/>
            <person name="Jonghe P.D."/>
            <person name="Takahashi Y."/>
            <person name="Tsuji S."/>
            <person name="Pericak-Vance M.A."/>
            <person name="Quattrone A."/>
            <person name="Battaloglu E."/>
            <person name="Polyakov A.V."/>
            <person name="Timmerman V."/>
            <person name="Schroeder J.M."/>
            <person name="Vance J.M."/>
        </authorList>
    </citation>
    <scope>DISEASE</scope>
    <scope>VARIANTS CMT2A2A PHE-69; PRO-76; GLN-94; ALA-251; HIS-280 AND SER-740</scope>
</reference>
<reference key="14">
    <citation type="journal article" date="2004" name="Nat. Genet.">
        <authorList>
            <person name="Zuechner S."/>
            <person name="Mersiyanova I.V."/>
            <person name="Muglia M."/>
            <person name="Bissar-Tadmouri N."/>
            <person name="Rochelle J."/>
            <person name="Dadali E.L."/>
            <person name="Zappia M."/>
            <person name="Nelis E."/>
            <person name="Patitucci A."/>
            <person name="Senderek J."/>
            <person name="Parman Y."/>
            <person name="Evgrafov O."/>
            <person name="Jonghe P.D."/>
            <person name="Takahashi Y."/>
            <person name="Tsuji S."/>
            <person name="Pericak-Vance M.A."/>
            <person name="Quattrone A."/>
            <person name="Battaloglu E."/>
            <person name="Polyakov A.V."/>
            <person name="Timmerman V."/>
            <person name="Schroeder J.M."/>
            <person name="Vance J.M."/>
        </authorList>
    </citation>
    <scope>ERRATUM OF PUBMED:15064763</scope>
</reference>
<reference key="15">
    <citation type="journal article" date="2007" name="J. Biol. Chem.">
        <title>Identification of a novel mitochondrial complex containing mitofusin 2 and stomatin-like protein 2.</title>
        <authorList>
            <person name="Hajek P."/>
            <person name="Chomyn A."/>
            <person name="Attardi G."/>
        </authorList>
    </citation>
    <scope>INTERACTION WITH STOML2</scope>
</reference>
<reference key="16">
    <citation type="journal article" date="2011" name="BMC Syst. Biol.">
        <title>Initial characterization of the human central proteome.</title>
        <authorList>
            <person name="Burkard T.R."/>
            <person name="Planyavsky M."/>
            <person name="Kaupe I."/>
            <person name="Breitwieser F.P."/>
            <person name="Buerckstuemmer T."/>
            <person name="Bennett K.L."/>
            <person name="Superti-Furga G."/>
            <person name="Colinge J."/>
        </authorList>
    </citation>
    <scope>IDENTIFICATION BY MASS SPECTROMETRY [LARGE SCALE ANALYSIS]</scope>
</reference>
<reference key="17">
    <citation type="journal article" date="2011" name="Neurology">
        <title>Recessive axonal Charcot-Marie-Tooth disease due to compound heterozygous mitofusin 2 mutations.</title>
        <authorList>
            <person name="Polke J.M."/>
            <person name="Laura M."/>
            <person name="Pareyson D."/>
            <person name="Taroni F."/>
            <person name="Milani M."/>
            <person name="Bergamin G."/>
            <person name="Gibbons V.S."/>
            <person name="Hovdulden H."/>
            <person name="Chavdmley S.C."/>
            <person name="Blake J."/>
            <person name="Devile C."/>
            <person name="Sandford R."/>
            <person name="Sweeney M.G."/>
            <person name="Davis M.B."/>
            <person name="Reilly M.M."/>
        </authorList>
    </citation>
    <scope>INVOLVEMENT IN CMT2A2B</scope>
    <scope>VARIANTS CMT2A2B LYS-38 DEL; SER-216 AND MET-362</scope>
</reference>
<reference key="18">
    <citation type="journal article" date="2013" name="Science">
        <title>PINK1-phosphorylated mitofusin 2 is a Parkin receptor for culling damaged mitochondria.</title>
        <authorList>
            <person name="Chen Y."/>
            <person name="Dorn G.W. II"/>
        </authorList>
    </citation>
    <scope>FUNCTION IN MITOPHAGY</scope>
    <scope>INTERACTION WITH PRKN</scope>
    <scope>PHOSPHORYLATION AT THR-111 AND SER-442 BY PINK1</scope>
    <scope>UBIQUITINATION BY PRKN</scope>
    <scope>SUBCELLULAR LOCATION</scope>
    <scope>MUTAGENESIS OF THR-111 AND SER-442</scope>
</reference>
<reference key="19">
    <citation type="journal article" date="2014" name="Diabetes">
        <title>IHG-1 increases mitochondrial fusion and bioenergetic function.</title>
        <authorList>
            <person name="Hickey F.B."/>
            <person name="Corcoran J.B."/>
            <person name="Griffin B."/>
            <person name="Bhreathnach U."/>
            <person name="Mortiboys H."/>
            <person name="Reid H.M."/>
            <person name="Andrews D."/>
            <person name="Byrne S."/>
            <person name="Furlong F."/>
            <person name="Martin F."/>
            <person name="Godson C."/>
            <person name="Murphy M."/>
        </authorList>
    </citation>
    <scope>INTERACTION WITH THG1L</scope>
</reference>
<reference key="20">
    <citation type="journal article" date="2015" name="Hum. Mol. Genet.">
        <title>Homozygous mutations in MFN2 cause multiple symmetric lipomatosis associated with neuropathy.</title>
        <authorList>
            <consortium name="Care4Rare Canada Consortium"/>
            <person name="Sawyer S.L."/>
            <person name="Cheuk-Him Ng A."/>
            <person name="Innes A.M."/>
            <person name="Wagner J.D."/>
            <person name="Dyment D.A."/>
            <person name="Tetreault M."/>
            <person name="Majewski J."/>
            <person name="Boycott K.M."/>
            <person name="Screaton R.A."/>
            <person name="Nicholson G."/>
        </authorList>
    </citation>
    <scope>FUNCTION</scope>
    <scope>SUBUNIT</scope>
    <scope>VARIANT MSL TRP-707</scope>
    <scope>CHARACTERIZATION OF VARIANT HMSN6A TRP-94</scope>
    <scope>CHARACTERIZATION OF VARIANT MSL TRP-707</scope>
</reference>
<reference key="21">
    <citation type="journal article" date="2015" name="Nature">
        <title>Regulation of mitochondrial morphology and function by stearoylation of TFR1.</title>
        <authorList>
            <person name="Senyilmaz D."/>
            <person name="Virtue S."/>
            <person name="Xu X."/>
            <person name="Tan C.Y."/>
            <person name="Griffin J.L."/>
            <person name="Miller A.K."/>
            <person name="Vidal-Puig A."/>
            <person name="Teleman A.A."/>
        </authorList>
    </citation>
    <scope>FUNCTION</scope>
    <scope>UBIQUITINATION</scope>
    <scope>SUBCELLULAR LOCATION</scope>
</reference>
<reference key="22">
    <citation type="journal article" date="2016" name="Am. J. Med. Genet. A">
        <title>Autosomal recessive MFN2-related Charcot-Marie-Tooth disease with diaphragmatic weakness: Case report and literature review.</title>
        <authorList>
            <person name="Tan C.A."/>
            <person name="Rabideau M."/>
            <person name="Blevins A."/>
            <person name="Westbrook M.J."/>
            <person name="Ekstein T."/>
            <person name="Nykamp K."/>
            <person name="Deucher A."/>
            <person name="Harper A."/>
            <person name="Demmer L."/>
        </authorList>
    </citation>
    <scope>INVOLVEMENT IN CMT2A2B</scope>
</reference>
<reference key="23">
    <citation type="journal article" date="2017" name="Elife">
        <title>Human biallelic MFN2 mutations induce mitochondrial dysfunction, upper body adipose hyperplasia, and suppression of leptin expression.</title>
        <authorList>
            <person name="Rocha N."/>
            <person name="Bulger D.A."/>
            <person name="Frontini A."/>
            <person name="Titheradge H."/>
            <person name="Gribsholt S.B."/>
            <person name="Knox R."/>
            <person name="Page M."/>
            <person name="Harris J."/>
            <person name="Payne F."/>
            <person name="Adams C."/>
            <person name="Sleigh A."/>
            <person name="Crawford J."/>
            <person name="Gjesing A.P."/>
            <person name="Bork-Jensen J."/>
            <person name="Pedersen O."/>
            <person name="Barroso I."/>
            <person name="Hansen T."/>
            <person name="Cox H."/>
            <person name="Reilly M."/>
            <person name="Rossor A."/>
            <person name="Brown R.J."/>
            <person name="Taylor S.I."/>
            <person name="McHale D."/>
            <person name="Armstrong M."/>
            <person name="Oral E.A."/>
            <person name="Saudek V."/>
            <person name="O'Rahilly S."/>
            <person name="Maher E.R."/>
            <person name="Richelsen B."/>
            <person name="Savage D.B."/>
            <person name="Semple R.K."/>
        </authorList>
    </citation>
    <scope>INVOLVEMENT IN MSL</scope>
    <scope>VARIANTS MSL ARG-343 DEL AND TRP-707</scope>
</reference>
<reference key="24">
    <citation type="journal article" date="2017" name="Nature">
        <title>MFN1 structures reveal nucleotide-triggered dimerization critical for mitochondrial fusion.</title>
        <authorList>
            <person name="Cao Y.L."/>
            <person name="Meng S."/>
            <person name="Chen Y."/>
            <person name="Feng J.X."/>
            <person name="Gu D.D."/>
            <person name="Yu B."/>
            <person name="Li Y.J."/>
            <person name="Yang J.Y."/>
            <person name="Liao S."/>
            <person name="Chan D.C."/>
            <person name="Gao S."/>
        </authorList>
    </citation>
    <scope>FUNCTION</scope>
    <scope>CATALYTIC ACTIVITY</scope>
    <scope>MUTAGENESIS OF HIS-128; GLU-230; ARG-259; TRP-260 AND GLU-266</scope>
</reference>
<reference key="25">
    <citation type="journal article" date="2018" name="Nat. Commun.">
        <title>HUWE1 E3 ligase promotes PINK1/PARKIN-independent mitophagy by regulating AMBRA1 activation via IKKalpha.</title>
        <authorList>
            <person name="Di Rita A."/>
            <person name="Peschiaroli A."/>
            <person name="D'Acunzo P."/>
            <person name="Strobbe D."/>
            <person name="Hu Z."/>
            <person name="Gruber J."/>
            <person name="Nygaard M."/>
            <person name="Lambrughi M."/>
            <person name="Melino G."/>
            <person name="Papaleo E."/>
            <person name="Dengjel J."/>
            <person name="El Alaoui S."/>
            <person name="Campanella M."/>
            <person name="Doetsch V."/>
            <person name="Rogov V.V."/>
            <person name="Strappazzon F."/>
            <person name="Cecconi F."/>
        </authorList>
    </citation>
    <scope>UBIQUITINATION</scope>
</reference>
<reference key="26">
    <citation type="journal article" date="2005" name="Hum. Genet.">
        <title>Mitochondrial GTPase mitofusin 2 mutation in Charcot-Marie-Tooth neuropathy type 2A.</title>
        <authorList>
            <person name="Kijima K."/>
            <person name="Numakura C."/>
            <person name="Izumino H."/>
            <person name="Umetsu K."/>
            <person name="Nezu A."/>
            <person name="Shiiki T."/>
            <person name="Ogawa M."/>
            <person name="Ishizaki Y."/>
            <person name="Kitamura T."/>
            <person name="Shozawa Y."/>
            <person name="Hayasaka K."/>
        </authorList>
    </citation>
    <scope>VARIANT CMT2A2A ASN-357</scope>
</reference>
<reference key="27">
    <citation type="journal article" date="2005" name="Neurology">
        <title>Charcot-Marie-Tooth with pyramidal signs is genetically heterogeneous: families with and without MFN2 mutations.</title>
        <authorList>
            <person name="Zhu D."/>
            <person name="Kennerson M.L."/>
            <person name="Walizada G."/>
            <person name="Zuechner S."/>
            <person name="Vance J.M."/>
            <person name="Nicholson G.A."/>
        </authorList>
    </citation>
    <scope>VARIANT CMT2A2A ASP-165</scope>
</reference>
<reference key="28">
    <citation type="journal article" date="2006" name="Ann. Neurol.">
        <title>Axonal neuropathy with optic atrophy is caused by mutations in mitofusin 2.</title>
        <authorList>
            <person name="Zuechner S."/>
            <person name="De Jonghe P."/>
            <person name="Jordanova A."/>
            <person name="Claeys K.G."/>
            <person name="Guergueltcheva V."/>
            <person name="Cherninkova S."/>
            <person name="Hamilton S.R."/>
            <person name="Van Stavern G."/>
            <person name="Krajewski K.M."/>
            <person name="Stajich J."/>
            <person name="Tournev I."/>
            <person name="Verhoeven K."/>
            <person name="Langerhorst C.T."/>
            <person name="de Visser M."/>
            <person name="Baas F."/>
            <person name="Bird T."/>
            <person name="Timmerman V."/>
            <person name="Shy M."/>
            <person name="Vance J.M."/>
        </authorList>
    </citation>
    <scope>VARIANTS HMSN6A TRP-94; ILE-206; ARG-276; TYR-361 AND TRP-364</scope>
</reference>
<reference key="29">
    <citation type="journal article" date="2006" name="BMC Med. Genet.">
        <title>Charcot-Marie-Tooth neuropathy type 2A: novel mutations in the mitofusin 2 gene (MFN2).</title>
        <authorList>
            <person name="Engelfried K."/>
            <person name="Vorgerd M."/>
            <person name="Hagedorn M."/>
            <person name="Haas G."/>
            <person name="Gilles J."/>
            <person name="Epplen J.T."/>
            <person name="Meins M."/>
        </authorList>
    </citation>
    <scope>VARIANTS CMT2A2A VAL-127; VAL-347; ILE-376 AND HIS-468</scope>
    <scope>VARIANT ILE-705</scope>
</reference>
<reference key="30">
    <citation type="journal article" date="2006" name="Brain">
        <title>Early onset severe and late-onset mild Charcot-Marie-Tooth disease with mitofusin 2 (MFN2) mutations.</title>
        <authorList>
            <person name="Chung K.W."/>
            <person name="Kim S.B."/>
            <person name="Park K.D."/>
            <person name="Choi K.G."/>
            <person name="Lee J.H."/>
            <person name="Eun H.W."/>
            <person name="Suh J.S."/>
            <person name="Hwang J.H."/>
            <person name="Kim W.K."/>
            <person name="Seo B.C."/>
            <person name="Kim S.H."/>
            <person name="Son I.H."/>
            <person name="Kim S.M."/>
            <person name="Sunwoo I.N."/>
            <person name="Choi B.O."/>
        </authorList>
    </citation>
    <scope>VARIANT HMSN6A TRP-364</scope>
    <scope>VARIANTS CMT2A2A PRO-92; TRP-94; MET-105; ASP-127; ARG-165; PRO-263; HIS-280; MET-362; TRP-364 AND THR-376</scope>
</reference>
<reference key="31">
    <citation type="journal article" date="2008" name="J. Neurol.">
        <title>Cerebral involvement in axonal Charcot-Marie-Tooth neuropathy caused by mitofusin2 mutations.</title>
        <authorList>
            <person name="Brockmann K."/>
            <person name="Dreha-Kulaczewski S."/>
            <person name="Dechent P."/>
            <person name="Boennemann C."/>
            <person name="Helms G."/>
            <person name="Kyllerman M."/>
            <person name="Brueck W."/>
            <person name="Frahm J."/>
            <person name="Huehne K."/>
            <person name="Gaertner J."/>
            <person name="Rautenstrauss B."/>
        </authorList>
    </citation>
    <scope>VARIANT CMT2A2A TRP-104</scope>
</reference>
<reference key="32">
    <citation type="journal article" date="2008" name="Neurology">
        <title>Severe early-onset axonal neuropathy with homozygous and compound heterozygous MFN2 mutations.</title>
        <authorList>
            <person name="Nicholson G.A."/>
            <person name="Magdelaine C."/>
            <person name="Zhu D."/>
            <person name="Grew S."/>
            <person name="Ryan M.M."/>
            <person name="Sturtz F."/>
            <person name="Vallat J.M."/>
            <person name="Ouvrier R.A."/>
        </authorList>
    </citation>
    <scope>VARIANT MSL TRP-707</scope>
    <scope>VARIANTS CMT2A2B VAL-164; ASN-214; MET-362 AND ARG-390</scope>
</reference>
<reference key="33">
    <citation type="journal article" date="2008" name="Neurology">
        <title>Mutated mitofusin 2 presents with intrafamilial variability and brain mitochondrial dysfunction.</title>
        <authorList>
            <person name="Del Bo R."/>
            <person name="Moggio M."/>
            <person name="Rango M."/>
            <person name="Bonato S."/>
            <person name="D'Angelo M.G."/>
            <person name="Ghezzi S."/>
            <person name="Airoldi G."/>
            <person name="Bassi M.T."/>
            <person name="Guglieri M."/>
            <person name="Napoli L."/>
            <person name="Lamperti C."/>
            <person name="Corti S."/>
            <person name="Federico A."/>
            <person name="Bresolin N."/>
            <person name="Comi G.P."/>
        </authorList>
    </citation>
    <scope>VARIANT CMT2A2A TRP-104</scope>
</reference>
<reference key="34">
    <citation type="journal article" date="2009" name="Arch. Neurol.">
        <title>Genotype-phenotype correlations in Charcot-Marie-Tooth disease type 2 caused by mitofusin 2 mutations.</title>
        <authorList>
            <person name="Calvo J."/>
            <person name="Funalot B."/>
            <person name="Ouvrier R.A."/>
            <person name="Lazaro L."/>
            <person name="Toutain A."/>
            <person name="De Mas P."/>
            <person name="Bouche P."/>
            <person name="Gilbert-Dussardier B."/>
            <person name="Arne-Bes M.C."/>
            <person name="Carriere J.P."/>
            <person name="Journel H."/>
            <person name="Minot-Myhie M.C."/>
            <person name="Guillou C."/>
            <person name="Ghorab K."/>
            <person name="Magy L."/>
            <person name="Sturtz F."/>
            <person name="Vallat J.M."/>
            <person name="Magdelaine C."/>
        </authorList>
    </citation>
    <scope>VARIANTS CMT2A2B ARG-108 AND TRP-707</scope>
    <scope>VARIANTS HMSN6A TRP-94; TRP-104 AND ARG-276</scope>
    <scope>VARIANTS CMT2A2A ARG-128; ILE-156; MET-236; MET-244; TYR-277; PRO-364; GLN-364; SER-665; CYS-740; PRO-745 AND THR-747</scope>
</reference>
<reference key="35">
    <citation type="journal article" date="2010" name="BMC Med. Genet.">
        <title>MFN2 point mutations occur in 3.4% of Charcot-Marie-Tooth families. An investigation of 232 Norwegian CMT families.</title>
        <authorList>
            <person name="Braathen G.J."/>
            <person name="Sand J.C."/>
            <person name="Lobato A."/>
            <person name="Hoeyer H."/>
            <person name="Russell M.B."/>
        </authorList>
    </citation>
    <scope>VARIANT HMSN6A TRP-94</scope>
    <scope>VARIANT CMT2A2B GLN-94</scope>
    <scope>VARIANTS HIS-468; SER-570; ILE-705 AND THR-716</scope>
    <scope>VARIANT CMT2A2A TRP-707</scope>
</reference>
<reference key="36">
    <citation type="journal article" date="2010" name="J. Med. Genet.">
        <title>Phenotypic spectrum of MFN2 mutations in the Spanish population.</title>
        <authorList>
            <person name="Casasnovas C."/>
            <person name="Banchs I."/>
            <person name="Cassereau J."/>
            <person name="Gueguen N."/>
            <person name="Chevrollier A."/>
            <person name="Martinez-Matos J.A."/>
            <person name="Bonneau D."/>
            <person name="Volpini V."/>
        </authorList>
    </citation>
    <scope>VARIANTS CMT2A2A TRP-94; MET-203; LYS-252; HIS-276; ARG-298; GLN-364; VAL-376 AND HIS-468</scope>
    <scope>VARIANT HMSN6A GLN-94</scope>
    <scope>CHARACTERIZATION OF VARIANT HIS-468</scope>
    <scope>FUNCTION</scope>
</reference>
<reference key="37">
    <citation type="journal article" date="2011" name="PLoS ONE">
        <title>The mutational spectrum in a cohort of Charcot-Marie-Tooth disease type 2 among the Han Chinese in Taiwan.</title>
        <authorList>
            <person name="Lin K.P."/>
            <person name="Soong B.W."/>
            <person name="Yang C.C."/>
            <person name="Huang L.W."/>
            <person name="Chang M.H."/>
            <person name="Lee I.H."/>
            <person name="Antonellis A."/>
            <person name="Lee Y.C."/>
        </authorList>
    </citation>
    <scope>VARIANTS CMT2A2A VAL-233; TRP-364 AND MET-744</scope>
</reference>
<reference key="38">
    <citation type="journal article" date="2013" name="J. Neurodegener. Dis.">
        <title>The MFN2 V705I variant is not a disease-causing mutation: a segregation analysis in a CMT2 family.</title>
        <authorList>
            <person name="Albulym O.M."/>
            <person name="Zhu D."/>
            <person name="Reddel S."/>
            <person name="Kennerson M."/>
            <person name="Nicholson G."/>
        </authorList>
    </citation>
    <scope>VARIANT ILE-705</scope>
</reference>
<reference key="39">
    <citation type="journal article" date="2014" name="J. Neurol.">
        <title>Whole-exome sequencing in patients with inherited neuropathies: outcome and challenges.</title>
        <authorList>
            <person name="Schabhuettl M."/>
            <person name="Wieland T."/>
            <person name="Senderek J."/>
            <person name="Baets J."/>
            <person name="Timmerman V."/>
            <person name="De Jonghe P."/>
            <person name="Reilly M.M."/>
            <person name="Stieglbauer K."/>
            <person name="Laich E."/>
            <person name="Windhager R."/>
            <person name="Erwa W."/>
            <person name="Trajanoski S."/>
            <person name="Strom T.M."/>
            <person name="Auer-Grumbach M."/>
        </authorList>
    </citation>
    <scope>VARIANT HIS-259</scope>
</reference>
<reference key="40">
    <citation type="journal article" date="2014" name="J. Neurol. Neurosurg. Psych.">
        <title>Application of whole exome sequencing in undiagnosed inherited polyneuropathies.</title>
        <authorList>
            <person name="Klein C.J."/>
            <person name="Middha S."/>
            <person name="Duan X."/>
            <person name="Wu Y."/>
            <person name="Litchy W.J."/>
            <person name="Gu W."/>
            <person name="Dyck P.J."/>
            <person name="Gavrilova R.H."/>
            <person name="Smith D.I."/>
            <person name="Kocher J.P."/>
            <person name="Dyck P.J."/>
        </authorList>
    </citation>
    <scope>VARIANT HMSN6A GLN-94</scope>
</reference>
<reference key="41">
    <citation type="journal article" date="2021" name="BMC Med. Genomics">
        <title>Novel homozygous mutations in Pakistani families with Charcot-Marie-Tooth disease.</title>
        <authorList>
            <person name="Kanwal S."/>
            <person name="Choi Y.J."/>
            <person name="Lim S.O."/>
            <person name="Choi H.J."/>
            <person name="Park J.H."/>
            <person name="Nuzhat R."/>
            <person name="Khan A."/>
            <person name="Perveen S."/>
            <person name="Choi B.O."/>
            <person name="Chung K.W."/>
        </authorList>
    </citation>
    <scope>VARIANT CMT2A2B MET-112</scope>
</reference>
<gene>
    <name evidence="37 42" type="primary">MFN2</name>
    <name type="synonym">CPRP1</name>
    <name evidence="39" type="synonym">KIAA0214</name>
</gene>
<organism>
    <name type="scientific">Homo sapiens</name>
    <name type="common">Human</name>
    <dbReference type="NCBI Taxonomy" id="9606"/>
    <lineage>
        <taxon>Eukaryota</taxon>
        <taxon>Metazoa</taxon>
        <taxon>Chordata</taxon>
        <taxon>Craniata</taxon>
        <taxon>Vertebrata</taxon>
        <taxon>Euteleostomi</taxon>
        <taxon>Mammalia</taxon>
        <taxon>Eutheria</taxon>
        <taxon>Euarchontoglires</taxon>
        <taxon>Primates</taxon>
        <taxon>Haplorrhini</taxon>
        <taxon>Catarrhini</taxon>
        <taxon>Hominidae</taxon>
        <taxon>Homo</taxon>
    </lineage>
</organism>
<sequence>MSLLFSRCNSIVTVKKNKRHMAEVNASPLKHFVTAKKKINGIFEQLGAYIQESATFLEDTYRNAELDPVTTEEQVLDVKGYLSKVRGISEVLARRHMKVAFFGRTSNGKSTVINAMLWDKVLPSGIGHTTNCFLRVEGTDGHEAFLLTEGSEEKRSAKTVNQLAHALHQDKQLHAGSLVSVMWPNSKCPLLKDDLVLMDSPGIDVTTELDSWIDKFCLDADVFVLVANSESTLMQTEKHFFHKVSERLSRPNIFILNNRWDASASEPEYMEEVRRQHMERCTSFLVDELGVVDRSQAGDRIFFVSAKEVLNARIQKAQGMPEGGGALAEGFQVRMFEFQNFERRFEECISQSAVKTKFEQHTVRAKQIAEAVRLIMDSLHMAAREQQVYCEEMREERQDRLKFIDKQLELLAQDYKLRIKQITEEVERQVSTAMAEEIRRLSVLVDDYQMDFHPSPVVLKVYKNELHRHIEEGLGRNMSDRCSTAITNSLQTMQQDMIDGLKPLLPVSVRSQIDMLVPRQCFSLNYDLNCDKLCADFQEDIEFHFSLGWTMLVNRFLGPKNSRRALMGYNDQVQRPIPLTPANPSMPPLPQGSLTQEEFMVSMVTGLASLTSRTSMGILVVGGVVWKAVGWRLIALSFGLYGLLYVYERLTWTTKAKERAFKRQFVEHASEKLQLVISYTGSNCSHQVQQELSGTFAHLCQQVDVTRENLEQEIAAMNKKIEVLDSLQSKAKLLRNKAGWLDSELNMFTHQYLQPSR</sequence>